<sequence>MDQNQHLNKTAEAQPSENKKTRYCNGLKMFLAALSLSFIAKTLGAIIMKSSIIHIERRFEISSSLVGFIDGSFEIGNLLVIVFVSYFGSKLHRPKLIGIGCFIMGIGGVLTALPHFFMGYYRYSKETNINSSENSTSTLSTCLINQILSLNRASPEIVGKGCLKESGSYMWIYVFMGNMLRGIGETPIVPLGLSYIDDFAKEGHSSLYLGILNAIAMIGPIIGFTLGSLFSKMYVDIGYVDLSTIRITPTDSRWVGAWWLNFLVSGLFSIISSIPFFFLPQTPNKPQKERKASLSLHVLETNDEKDQTANLTNQGKNITKNVTGFFQSFKSILTNPLYVMFVLLTLLQVSSYIGAFTYVFKYVEQQYGQPSSKANILLGVITIPIFASGMFLGGYIIKKFKLNTVGIAKFSCFTAVMSLSFYLLYFFILCENKSVAGLTMTYDGNNPVTSHRDVPLSYCNSDCNCDESQWEPVCGNNGITYISPCLAGCKSSSGNKKPIVFYNCSCLEVTGLQNRNYSAHLGECPRDDACTRKFYFFVAIQVLNLFFSALGGTSHVMLIVKIVQPELKSLALGFHSMVIRALGGILAPIYFGALIDTTCIKWSTNNCGTRGSCRTYNSTSFSRVYLGLSSMLRVSSLVLYIILIYAMKKKYQEKDINASENGSVMDEANLESLNKNKHFVPSAGADSETHC</sequence>
<gene>
    <name type="primary">SLCO1B1</name>
    <name type="synonym">LST1</name>
    <name type="synonym">OATP1B1</name>
    <name type="synonym">OATP2</name>
    <name type="synonym">OATPC</name>
    <name type="synonym">SLC21A6</name>
</gene>
<feature type="chain" id="PRO_0000191050" description="Solute carrier organic anion transporter family member 1B1">
    <location>
        <begin position="1"/>
        <end position="691"/>
    </location>
</feature>
<feature type="topological domain" description="Cytoplasmic" evidence="1">
    <location>
        <begin position="1"/>
        <end position="28"/>
    </location>
</feature>
<feature type="transmembrane region" description="Helical; Name=1" evidence="1">
    <location>
        <begin position="29"/>
        <end position="48"/>
    </location>
</feature>
<feature type="topological domain" description="Extracellular" evidence="1">
    <location>
        <begin position="49"/>
        <end position="67"/>
    </location>
</feature>
<feature type="transmembrane region" description="Helical; Name=2" evidence="1">
    <location>
        <begin position="68"/>
        <end position="88"/>
    </location>
</feature>
<feature type="topological domain" description="Cytoplasmic" evidence="1">
    <location>
        <begin position="89"/>
        <end position="94"/>
    </location>
</feature>
<feature type="transmembrane region" description="Helical; Name=3" evidence="1">
    <location>
        <begin position="95"/>
        <end position="119"/>
    </location>
</feature>
<feature type="topological domain" description="Extracellular" evidence="1">
    <location>
        <begin position="120"/>
        <end position="168"/>
    </location>
</feature>
<feature type="transmembrane region" description="Helical; Name=4" evidence="1">
    <location>
        <begin position="169"/>
        <end position="197"/>
    </location>
</feature>
<feature type="topological domain" description="Cytoplasmic" evidence="1">
    <location>
        <begin position="198"/>
        <end position="216"/>
    </location>
</feature>
<feature type="transmembrane region" description="Helical; Name=5" evidence="1">
    <location>
        <begin position="217"/>
        <end position="237"/>
    </location>
</feature>
<feature type="topological domain" description="Extracellular" evidence="1">
    <location>
        <begin position="238"/>
        <end position="255"/>
    </location>
</feature>
<feature type="transmembrane region" description="Helical; Name=6" evidence="1">
    <location>
        <begin position="256"/>
        <end position="280"/>
    </location>
</feature>
<feature type="topological domain" description="Cytoplasmic" evidence="1">
    <location>
        <begin position="281"/>
        <end position="331"/>
    </location>
</feature>
<feature type="transmembrane region" description="Helical; Name=7" evidence="1">
    <location>
        <begin position="332"/>
        <end position="353"/>
    </location>
</feature>
<feature type="topological domain" description="Extracellular" evidence="1">
    <location>
        <begin position="354"/>
        <end position="373"/>
    </location>
</feature>
<feature type="transmembrane region" description="Helical; Name=8" evidence="1">
    <location>
        <begin position="374"/>
        <end position="397"/>
    </location>
</feature>
<feature type="topological domain" description="Cytoplasmic" evidence="1">
    <location>
        <begin position="398"/>
        <end position="401"/>
    </location>
</feature>
<feature type="transmembrane region" description="Helical; Name=9" evidence="1">
    <location>
        <begin position="402"/>
        <end position="425"/>
    </location>
</feature>
<feature type="topological domain" description="Extracellular" evidence="1">
    <location>
        <begin position="426"/>
        <end position="537"/>
    </location>
</feature>
<feature type="transmembrane region" description="Helical; Name=10" evidence="1">
    <location>
        <begin position="538"/>
        <end position="560"/>
    </location>
</feature>
<feature type="topological domain" description="Cytoplasmic" evidence="1">
    <location>
        <begin position="561"/>
        <end position="569"/>
    </location>
</feature>
<feature type="transmembrane region" description="Helical; Name=11" evidence="1">
    <location>
        <begin position="570"/>
        <end position="595"/>
    </location>
</feature>
<feature type="topological domain" description="Extracellular" evidence="1">
    <location>
        <begin position="596"/>
        <end position="629"/>
    </location>
</feature>
<feature type="transmembrane region" description="Helical; Name=12" evidence="1">
    <location>
        <begin position="630"/>
        <end position="647"/>
    </location>
</feature>
<feature type="topological domain" description="Cytoplasmic" evidence="1">
    <location>
        <begin position="648"/>
        <end position="691"/>
    </location>
</feature>
<feature type="domain" description="Kazal-like" evidence="2">
    <location>
        <begin position="453"/>
        <end position="508"/>
    </location>
</feature>
<feature type="modified residue" description="Phosphoserine" evidence="31">
    <location>
        <position position="293"/>
    </location>
</feature>
<feature type="modified residue" description="Phosphoserine" evidence="31">
    <location>
        <position position="295"/>
    </location>
</feature>
<feature type="modified residue" description="Phosphoserine" evidence="31">
    <location>
        <position position="672"/>
    </location>
</feature>
<feature type="modified residue" description="Phosphoserine" evidence="31">
    <location>
        <position position="682"/>
    </location>
</feature>
<feature type="glycosylation site" description="N-linked (GlcNAc...) asparagine" evidence="1">
    <location>
        <position position="130"/>
    </location>
</feature>
<feature type="glycosylation site" description="N-linked (GlcNAc...) asparagine" evidence="20">
    <location>
        <position position="134"/>
    </location>
</feature>
<feature type="glycosylation site" description="N-linked (GlcNAc...) asparagine" evidence="1">
    <location>
        <position position="432"/>
    </location>
</feature>
<feature type="glycosylation site" description="N-linked (GlcNAc...) asparagine" evidence="20">
    <location>
        <position position="503"/>
    </location>
</feature>
<feature type="glycosylation site" description="N-linked (GlcNAc...) asparagine" evidence="20">
    <location>
        <position position="516"/>
    </location>
</feature>
<feature type="glycosylation site" description="N-linked (GlcNAc...) asparagine" evidence="1">
    <location>
        <position position="617"/>
    </location>
</feature>
<feature type="disulfide bond" evidence="2">
    <location>
        <begin position="459"/>
        <end position="489"/>
    </location>
</feature>
<feature type="disulfide bond" evidence="2">
    <location>
        <begin position="465"/>
        <end position="485"/>
    </location>
</feature>
<feature type="disulfide bond" evidence="2">
    <location>
        <begin position="474"/>
        <end position="506"/>
    </location>
</feature>
<feature type="sequence variant" id="VAR_015070" description="In dbSNP:rs56101265." evidence="7">
    <original>F</original>
    <variation>L</variation>
    <location>
        <position position="73"/>
    </location>
</feature>
<feature type="sequence variant" id="VAR_015071" description="In dbSNP:rs56061388." evidence="7">
    <original>V</original>
    <variation>A</variation>
    <location>
        <position position="82"/>
    </location>
</feature>
<feature type="sequence variant" id="VAR_015072" description="In dbSNP:rs2306283." evidence="4 7 8 9 12 24">
    <original>N</original>
    <variation>D</variation>
    <location>
        <position position="130"/>
    </location>
</feature>
<feature type="sequence variant" id="VAR_057724" description="In dbSNP:rs2306282.">
    <original>N</original>
    <variation>S</variation>
    <location>
        <position position="151"/>
    </location>
</feature>
<feature type="sequence variant" id="VAR_015073" evidence="3 7 8">
    <original>R</original>
    <variation>K</variation>
    <location>
        <position position="152"/>
    </location>
</feature>
<feature type="sequence variant" id="VAR_015074" description="Decreased transport activity; dbSNP:rs11045819." evidence="7 9 12">
    <original>P</original>
    <variation>T</variation>
    <location>
        <position position="155"/>
    </location>
</feature>
<feature type="sequence variant" id="VAR_015075" description="Decreased transport activity; dbSNP:rs72559745." evidence="7">
    <original>E</original>
    <variation>G</variation>
    <location>
        <position position="156"/>
    </location>
</feature>
<feature type="sequence variant" id="VAR_015076" description="Decreased transport activity; dbSNP:rs4149056." evidence="7 8">
    <original>V</original>
    <variation>A</variation>
    <location>
        <position position="174"/>
    </location>
</feature>
<feature type="sequence variant" id="VAR_015077" description="Strongly decreases expression at the plasma membrane; abolishes transport activity; dbSNP:rs72559746." evidence="9">
    <original>L</original>
    <variation>R</variation>
    <location>
        <position position="193"/>
    </location>
</feature>
<feature type="sequence variant" id="VAR_015078" description="In dbSNP:rs751709893." evidence="3 7 8">
    <original>D</original>
    <variation>N</variation>
    <location>
        <position position="241"/>
    </location>
</feature>
<feature type="sequence variant" id="VAR_060108" description="In dbSNP:rs11045852.">
    <original>I</original>
    <variation>V</variation>
    <location>
        <position position="245"/>
    </location>
</feature>
<feature type="sequence variant" id="VAR_015079" description="In dbSNP:rs55901008." evidence="7">
    <original>I</original>
    <variation>T</variation>
    <location>
        <position position="353"/>
    </location>
</feature>
<feature type="sequence variant" id="VAR_015080" description="In dbSNP:rs56387224." evidence="7">
    <original>N</original>
    <variation>D</variation>
    <location>
        <position position="432"/>
    </location>
</feature>
<feature type="sequence variant" id="VAR_015081" description="In dbSNP:rs72559748." evidence="7">
    <original>D</original>
    <variation>G</variation>
    <location>
        <position position="462"/>
    </location>
</feature>
<feature type="sequence variant" id="VAR_015082" description="In dbSNP:rs59502379." evidence="7">
    <original>G</original>
    <variation>A</variation>
    <location>
        <position position="488"/>
    </location>
</feature>
<feature type="sequence variant" id="VAR_057725" description="In dbSNP:rs34671512.">
    <original>L</original>
    <variation>F</variation>
    <location>
        <position position="643"/>
    </location>
</feature>
<feature type="sequence variant" id="VAR_015083" description="In dbSNP:rs56199088." evidence="7">
    <original>D</original>
    <variation>G</variation>
    <location>
        <position position="655"/>
    </location>
</feature>
<feature type="sequence variant" id="VAR_015084" description="In dbSNP:rs55737008." evidence="7">
    <original>E</original>
    <variation>G</variation>
    <location>
        <position position="667"/>
    </location>
</feature>
<feature type="mutagenesis site" description="Decreased estradiol-17beta-d-glucuronide uptake." evidence="22">
    <original>Y</original>
    <variation>F</variation>
    <location>
        <position position="367"/>
    </location>
</feature>
<feature type="mutagenesis site" description="Decreased estradiol-17beta-d-glucuronide uptake." evidence="22">
    <original>Y</original>
    <variation>F</variation>
    <location>
        <position position="625"/>
    </location>
</feature>
<feature type="mutagenesis site" description="Decreased estradiol-17beta-d-glucuronide uptake." evidence="22">
    <original>Y</original>
    <variation>F</variation>
    <location>
        <position position="645"/>
    </location>
</feature>
<feature type="helix" evidence="33">
    <location>
        <begin position="27"/>
        <end position="50"/>
    </location>
</feature>
<feature type="helix" evidence="33">
    <location>
        <begin position="52"/>
        <end position="59"/>
    </location>
</feature>
<feature type="helix" evidence="33">
    <location>
        <begin position="63"/>
        <end position="70"/>
    </location>
</feature>
<feature type="helix" evidence="33">
    <location>
        <begin position="72"/>
        <end position="87"/>
    </location>
</feature>
<feature type="helix" evidence="33">
    <location>
        <begin position="88"/>
        <end position="90"/>
    </location>
</feature>
<feature type="helix" evidence="33">
    <location>
        <begin position="93"/>
        <end position="110"/>
    </location>
</feature>
<feature type="helix" evidence="33">
    <location>
        <begin position="113"/>
        <end position="117"/>
    </location>
</feature>
<feature type="turn" evidence="32">
    <location>
        <begin position="161"/>
        <end position="164"/>
    </location>
</feature>
<feature type="helix" evidence="32">
    <location>
        <begin position="166"/>
        <end position="169"/>
    </location>
</feature>
<feature type="helix" evidence="33">
    <location>
        <begin position="171"/>
        <end position="184"/>
    </location>
</feature>
<feature type="turn" evidence="33">
    <location>
        <begin position="185"/>
        <end position="187"/>
    </location>
</feature>
<feature type="helix" evidence="33">
    <location>
        <begin position="188"/>
        <end position="198"/>
    </location>
</feature>
<feature type="helix" evidence="33">
    <location>
        <begin position="204"/>
        <end position="215"/>
    </location>
</feature>
<feature type="helix" evidence="33">
    <location>
        <begin position="218"/>
        <end position="230"/>
    </location>
</feature>
<feature type="strand" evidence="32">
    <location>
        <begin position="232"/>
        <end position="237"/>
    </location>
</feature>
<feature type="strand" evidence="33">
    <location>
        <begin position="251"/>
        <end position="253"/>
    </location>
</feature>
<feature type="helix" evidence="33">
    <location>
        <begin position="260"/>
        <end position="271"/>
    </location>
</feature>
<feature type="helix" evidence="33">
    <location>
        <begin position="275"/>
        <end position="277"/>
    </location>
</feature>
<feature type="helix" evidence="33">
    <location>
        <begin position="324"/>
        <end position="333"/>
    </location>
</feature>
<feature type="helix" evidence="33">
    <location>
        <begin position="336"/>
        <end position="366"/>
    </location>
</feature>
<feature type="turn" evidence="33">
    <location>
        <begin position="373"/>
        <end position="375"/>
    </location>
</feature>
<feature type="helix" evidence="33">
    <location>
        <begin position="376"/>
        <end position="400"/>
    </location>
</feature>
<feature type="helix" evidence="33">
    <location>
        <begin position="404"/>
        <end position="422"/>
    </location>
</feature>
<feature type="helix" evidence="33">
    <location>
        <begin position="423"/>
        <end position="427"/>
    </location>
</feature>
<feature type="turn" evidence="32">
    <location>
        <begin position="436"/>
        <end position="438"/>
    </location>
</feature>
<feature type="strand" evidence="32">
    <location>
        <begin position="451"/>
        <end position="453"/>
    </location>
</feature>
<feature type="helix" evidence="33">
    <location>
        <begin position="458"/>
        <end position="460"/>
    </location>
</feature>
<feature type="strand" evidence="32">
    <location>
        <begin position="473"/>
        <end position="475"/>
    </location>
</feature>
<feature type="strand" evidence="33">
    <location>
        <begin position="480"/>
        <end position="482"/>
    </location>
</feature>
<feature type="turn" evidence="33">
    <location>
        <begin position="484"/>
        <end position="488"/>
    </location>
</feature>
<feature type="strand" evidence="33">
    <location>
        <begin position="495"/>
        <end position="498"/>
    </location>
</feature>
<feature type="strand" evidence="33">
    <location>
        <begin position="501"/>
        <end position="503"/>
    </location>
</feature>
<feature type="strand" evidence="33">
    <location>
        <begin position="505"/>
        <end position="507"/>
    </location>
</feature>
<feature type="turn" evidence="33">
    <location>
        <begin position="510"/>
        <end position="512"/>
    </location>
</feature>
<feature type="strand" evidence="33">
    <location>
        <begin position="513"/>
        <end position="515"/>
    </location>
</feature>
<feature type="strand" evidence="33">
    <location>
        <begin position="518"/>
        <end position="522"/>
    </location>
</feature>
<feature type="helix" evidence="33">
    <location>
        <begin position="528"/>
        <end position="549"/>
    </location>
</feature>
<feature type="helix" evidence="33">
    <location>
        <begin position="554"/>
        <end position="559"/>
    </location>
</feature>
<feature type="turn" evidence="33">
    <location>
        <begin position="560"/>
        <end position="562"/>
    </location>
</feature>
<feature type="helix" evidence="32">
    <location>
        <begin position="565"/>
        <end position="567"/>
    </location>
</feature>
<feature type="helix" evidence="33">
    <location>
        <begin position="568"/>
        <end position="582"/>
    </location>
</feature>
<feature type="turn" evidence="33">
    <location>
        <begin position="583"/>
        <end position="585"/>
    </location>
</feature>
<feature type="helix" evidence="33">
    <location>
        <begin position="587"/>
        <end position="595"/>
    </location>
</feature>
<feature type="helix" evidence="33">
    <location>
        <begin position="596"/>
        <end position="598"/>
    </location>
</feature>
<feature type="strand" evidence="33">
    <location>
        <begin position="599"/>
        <end position="602"/>
    </location>
</feature>
<feature type="strand" evidence="33">
    <location>
        <begin position="613"/>
        <end position="616"/>
    </location>
</feature>
<feature type="helix" evidence="33">
    <location>
        <begin position="618"/>
        <end position="650"/>
    </location>
</feature>
<proteinExistence type="evidence at protein level"/>
<comment type="function">
    <text evidence="3 4 5 6 9 10 11 13 14 15 16 17 18 19 21 22 30">Mediates the Na(+)-independent uptake of organic anions (PubMed:10358072, PubMed:15159445, PubMed:17412826). Shows broad substrate specificity, can transport both organic anions such as bile acid taurocholate (cholyltaurine) and conjugated steroids (dehydroepiandrosterone 3-sulfate, 17-beta-glucuronosyl estradiol, and estrone 3-sulfate), as well as eicosanoids (prostaglandin E2, thromboxane B2, leukotriene C4, and leukotriene E4), and thyroid hormones (T4/L-thyroxine, and T3/3,3',5'-triiodo-L-thyronine) (PubMed:10358072, PubMed:10601278, PubMed:10873595, PubMed:11159893, PubMed:12196548, PubMed:12568656, PubMed:15159445, PubMed:15970799, PubMed:16627748, PubMed:17412826, PubMed:19129463, PubMed:26979622). Can take up bilirubin glucuronides from plasma into the liver, contributing to the detoxification-enhancing liver-blood shuttling loop (PubMed:22232210). Involved in the clearance of endogenous and exogenous substrates from the liver (PubMed:10358072, PubMed:10601278). Transports coproporphyrin I and III, by-products of heme synthesis, and may be involved in their hepatic disposition (PubMed:26383540). May contribute to regulate the transport of organic compounds in testes across the blood-testis-barrier (Probable). Can transport HMG-CoA reductase inhibitors (also known as statins), such as pravastatin and pitavastatin, a clinically important class of hypolipidemic drugs (PubMed:10601278, PubMed:15159445, PubMed:15970799). May play an important role in plasma and tissue distribution of the structurally diverse chemotherapeutic drug methotrexate (PubMed:23243220). May also transport antihypertension agents, such as the angiotensin-converting enzyme (ACE) inhibitor prodrug enalapril, and the highly selective angiotensin II AT1-receptor antagonist valsartan, in the liver (PubMed:16624871, PubMed:16627748). Shows a pH-sensitive substrate specificity towards prostaglandin E2 and T4 which may be ascribed to the protonation state of the binding site and leads to a stimulation of substrate transport in an acidic microenvironment (PubMed:19129463). Hydrogencarbonate/HCO3(-) acts as the probable counteranion that exchanges for organic anions (PubMed:19129463).</text>
</comment>
<comment type="catalytic activity">
    <reaction evidence="3 4 9 16 29">
        <text>taurocholate(out) = taurocholate(in)</text>
        <dbReference type="Rhea" id="RHEA:71703"/>
        <dbReference type="ChEBI" id="CHEBI:36257"/>
    </reaction>
</comment>
<comment type="catalytic activity">
    <reaction evidence="3 4">
        <text>dehydroepiandrosterone 3-sulfate(out) = dehydroepiandrosterone 3-sulfate(in)</text>
        <dbReference type="Rhea" id="RHEA:71839"/>
        <dbReference type="ChEBI" id="CHEBI:57905"/>
    </reaction>
</comment>
<comment type="catalytic activity">
    <reaction evidence="3 5 11 13 16 29">
        <text>estrone 3-sulfate(out) = estrone 3-sulfate(in)</text>
        <dbReference type="Rhea" id="RHEA:71835"/>
        <dbReference type="ChEBI" id="CHEBI:60050"/>
    </reaction>
</comment>
<comment type="catalytic activity">
    <reaction evidence="3">
        <text>3,3',5'-triiodo-L-thyronine(out) = 3,3',5'-triiodo-L-thyronine(in)</text>
        <dbReference type="Rhea" id="RHEA:71815"/>
        <dbReference type="ChEBI" id="CHEBI:57261"/>
    </reaction>
</comment>
<comment type="catalytic activity">
    <reaction evidence="3 4 29">
        <text>L-thyroxine(out) = L-thyroxine(in)</text>
        <dbReference type="Rhea" id="RHEA:71819"/>
        <dbReference type="ChEBI" id="CHEBI:58448"/>
    </reaction>
</comment>
<comment type="catalytic activity">
    <reaction evidence="3 5 29">
        <text>prostaglandin E2(out) = prostaglandin E2(in)</text>
        <dbReference type="Rhea" id="RHEA:50984"/>
        <dbReference type="ChEBI" id="CHEBI:606564"/>
    </reaction>
</comment>
<comment type="catalytic activity">
    <reaction evidence="3">
        <text>thromboxane B2(out) = thromboxane B2(in)</text>
        <dbReference type="Rhea" id="RHEA:50992"/>
        <dbReference type="ChEBI" id="CHEBI:90696"/>
    </reaction>
</comment>
<comment type="catalytic activity">
    <reaction evidence="3 5 9 10 11 13 15">
        <text>17beta-estradiol 17-O-(beta-D-glucuronate)(out) = 17beta-estradiol 17-O-(beta-D-glucuronate)(in)</text>
        <dbReference type="Rhea" id="RHEA:72691"/>
        <dbReference type="ChEBI" id="CHEBI:82961"/>
    </reaction>
</comment>
<comment type="catalytic activity">
    <reaction evidence="3">
        <text>leukotriene C4(out) = leukotriene C4(in)</text>
        <dbReference type="Rhea" id="RHEA:72743"/>
        <dbReference type="ChEBI" id="CHEBI:57973"/>
    </reaction>
</comment>
<comment type="catalytic activity">
    <reaction evidence="3">
        <text>leukotriene E4(out) = leukotriene E4(in)</text>
        <dbReference type="Rhea" id="RHEA:72747"/>
        <dbReference type="ChEBI" id="CHEBI:57462"/>
    </reaction>
</comment>
<comment type="catalytic activity">
    <reaction evidence="18">
        <text>(4E,15E)-bilirubin IXalpha C8-beta-D-glucuronoside(out) = (4E,15E)-bilirubin IXalpha C8-beta-D-glucuronoside(in)</text>
        <dbReference type="Rhea" id="RHEA:72791"/>
        <dbReference type="ChEBI" id="CHEBI:57767"/>
    </reaction>
</comment>
<comment type="catalytic activity">
    <reaction evidence="18">
        <text>bilirubin IXalpha bis-beta-D-glucuronoside(out) = bilirubin IXalpha bis-beta-D-glucuronoside(in)</text>
        <dbReference type="Rhea" id="RHEA:72795"/>
        <dbReference type="ChEBI" id="CHEBI:58471"/>
    </reaction>
</comment>
<comment type="biophysicochemical properties">
    <kinetics>
        <KM evidence="3">13.6 uM for taurocholate</KM>
        <KM evidence="3">3 uM for L-thyroxine</KM>
        <KM evidence="3">2.7 uM for 3,3',5'-triiodo-L-thyronine</KM>
        <KM evidence="4">33.8 uM for pravastatin</KM>
        <KM evidence="11">3 uM for pitavastatin</KM>
        <KM evidence="11">0.458 uM for estrone 3-sulfate</KM>
        <KM evidence="11">8.29 uM for 17beta-estradiol 17-O-(beta-D-glucuronate)</KM>
        <KM evidence="14">1.39 uM for valsartan</KM>
        <KM evidence="15">262 uM for enalapril</KM>
        <KM evidence="21">0.13 uM for coproporphyrin I</KM>
        <KM evidence="21">0.22 uM for coproporphyrin III</KM>
        <Vmax evidence="11">60.3 pmol/min/mg protein with estrone 3-sulfate</Vmax>
        <Vmax evidence="11">230.0 pmol/min/mg protein with pitavastatin</Vmax>
        <Vmax evidence="11">131.0 pmol/min/mg protein with 17beta-estradiol 17-O-(beta-D-glucuronate)</Vmax>
        <Vmax evidence="14">3.85 pmol/min/mg protein with valsartan</Vmax>
        <Vmax evidence="15">78.0 pmol/min/mg protein with enalapril</Vmax>
        <Vmax evidence="21">17.9 pmol/min/mg enzyme with coproporphyrin I as substrate</Vmax>
        <Vmax evidence="21">24.9 pmol/min/mg enzyme with coproporphyrin III as substrate</Vmax>
    </kinetics>
    <phDependence>
        <text evidence="17">Optimum pH is 6.5 with prostaglandin E2 and L-thyroxine (T4) as substrates.</text>
    </phDependence>
</comment>
<comment type="subcellular location">
    <subcellularLocation>
        <location evidence="9">Basolateral cell membrane</location>
        <topology evidence="9">Multi-pass membrane protein</topology>
    </subcellularLocation>
    <subcellularLocation>
        <location evidence="23">Basal cell membrane</location>
        <topology evidence="28">Multi-pass membrane protein</topology>
    </subcellularLocation>
    <text evidence="9 23">Detected in basolateral membranes of hepatocytes (PubMed:12196548). Localized to the basal membrane of Sertoli cells (PubMed:35307651).</text>
</comment>
<comment type="tissue specificity">
    <text evidence="3 4 5 9 11 18 23">Highly expressed in liver, at the basolateral membranes of centrilobular hepatocytes (PubMed:10358072, PubMed:10601278, PubMed:10873595, PubMed:12196548, PubMed:22232210). Expressed in liver (at protein level) (PubMed:15159445). Expressed in fetal liver (PubMed:10873595). Not detected in heart, brain, placenta, lung, skeletal muscle, kidney, pancreas, spleen, thymus, prostate, testis, ovary, small intestine, colon and leukocyte (PubMed:10358072, PubMed:10873595). In testis, primarily localized to the basal membrane of Sertoli cells and weakly expressed in Leydig cells and within the tubules (PubMed:35307651).</text>
</comment>
<comment type="domain">
    <text evidence="17">A conserved histidine residue in the third TMD (His-115) may play an essential role in the pH sensitivity of SLCO1B1/OATP1B1-mediated substrate transport.</text>
</comment>
<comment type="disease" evidence="18">
    <disease id="DI-03360">
        <name>Hyperbilirubinemia, Rotor type</name>
        <acronym>HBLRR</acronym>
        <description>An autosomal recessive form of primary conjugated hyperbilirubinemia. Affected individuals develop mild jaundice not associated with hemolysis shortly after birth or in childhood. They have delayed plasma clearance of the unconjugated anionic dye bromsulphthalein and prominent urinary excretion of coproporphyrin I. Hepatic pigmentation is normal.</description>
        <dbReference type="MIM" id="237450"/>
    </disease>
    <text>The disease is caused by variants affecting the gene represented in this entry.</text>
</comment>
<comment type="similarity">
    <text evidence="28">Belongs to the organo anion transporter (TC 2.A.60) family.</text>
</comment>
<keyword id="KW-0002">3D-structure</keyword>
<keyword id="KW-1003">Cell membrane</keyword>
<keyword id="KW-1015">Disulfide bond</keyword>
<keyword id="KW-0325">Glycoprotein</keyword>
<keyword id="KW-0406">Ion transport</keyword>
<keyword id="KW-0445">Lipid transport</keyword>
<keyword id="KW-0472">Membrane</keyword>
<keyword id="KW-0597">Phosphoprotein</keyword>
<keyword id="KW-1267">Proteomics identification</keyword>
<keyword id="KW-1185">Reference proteome</keyword>
<keyword id="KW-0812">Transmembrane</keyword>
<keyword id="KW-1133">Transmembrane helix</keyword>
<keyword id="KW-0813">Transport</keyword>
<name>SO1B1_HUMAN</name>
<accession>Q9Y6L6</accession>
<accession>B2R7G2</accession>
<accession>Q29R64</accession>
<accession>Q9NQ37</accession>
<accession>Q9UBF3</accession>
<accession>Q9UH89</accession>
<dbReference type="EMBL" id="AF060500">
    <property type="protein sequence ID" value="AAD38323.1"/>
    <property type="molecule type" value="mRNA"/>
</dbReference>
<dbReference type="EMBL" id="AF205071">
    <property type="protein sequence ID" value="AAF20212.1"/>
    <property type="molecule type" value="mRNA"/>
</dbReference>
<dbReference type="EMBL" id="AJ132573">
    <property type="protein sequence ID" value="CAB62577.1"/>
    <property type="molecule type" value="mRNA"/>
</dbReference>
<dbReference type="EMBL" id="AB026257">
    <property type="protein sequence ID" value="BAA78639.1"/>
    <property type="molecule type" value="mRNA"/>
</dbReference>
<dbReference type="EMBL" id="AJ400749">
    <property type="protein sequence ID" value="CAB97007.1"/>
    <property type="molecule type" value="Genomic_DNA"/>
</dbReference>
<dbReference type="EMBL" id="AJ400750">
    <property type="protein sequence ID" value="CAB97007.1"/>
    <property type="status" value="JOINED"/>
    <property type="molecule type" value="Genomic_DNA"/>
</dbReference>
<dbReference type="EMBL" id="AJ400751">
    <property type="protein sequence ID" value="CAB97007.1"/>
    <property type="status" value="JOINED"/>
    <property type="molecule type" value="Genomic_DNA"/>
</dbReference>
<dbReference type="EMBL" id="AJ400752">
    <property type="protein sequence ID" value="CAB97007.1"/>
    <property type="status" value="JOINED"/>
    <property type="molecule type" value="Genomic_DNA"/>
</dbReference>
<dbReference type="EMBL" id="AJ400753">
    <property type="protein sequence ID" value="CAB97007.1"/>
    <property type="status" value="JOINED"/>
    <property type="molecule type" value="Genomic_DNA"/>
</dbReference>
<dbReference type="EMBL" id="AJ400754">
    <property type="protein sequence ID" value="CAB97007.1"/>
    <property type="status" value="JOINED"/>
    <property type="molecule type" value="Genomic_DNA"/>
</dbReference>
<dbReference type="EMBL" id="AJ400755">
    <property type="protein sequence ID" value="CAB97007.1"/>
    <property type="status" value="JOINED"/>
    <property type="molecule type" value="Genomic_DNA"/>
</dbReference>
<dbReference type="EMBL" id="AJ400756">
    <property type="protein sequence ID" value="CAB97007.1"/>
    <property type="status" value="JOINED"/>
    <property type="molecule type" value="Genomic_DNA"/>
</dbReference>
<dbReference type="EMBL" id="AJ400757">
    <property type="protein sequence ID" value="CAB97007.1"/>
    <property type="status" value="JOINED"/>
    <property type="molecule type" value="Genomic_DNA"/>
</dbReference>
<dbReference type="EMBL" id="AJ400758">
    <property type="protein sequence ID" value="CAB97007.1"/>
    <property type="status" value="JOINED"/>
    <property type="molecule type" value="Genomic_DNA"/>
</dbReference>
<dbReference type="EMBL" id="AJ400759">
    <property type="protein sequence ID" value="CAB97007.1"/>
    <property type="status" value="JOINED"/>
    <property type="molecule type" value="Genomic_DNA"/>
</dbReference>
<dbReference type="EMBL" id="AJ400760">
    <property type="protein sequence ID" value="CAB97007.1"/>
    <property type="status" value="JOINED"/>
    <property type="molecule type" value="Genomic_DNA"/>
</dbReference>
<dbReference type="EMBL" id="AJ400761">
    <property type="protein sequence ID" value="CAB97007.1"/>
    <property type="status" value="JOINED"/>
    <property type="molecule type" value="Genomic_DNA"/>
</dbReference>
<dbReference type="EMBL" id="AJ400762">
    <property type="protein sequence ID" value="CAB97007.1"/>
    <property type="status" value="JOINED"/>
    <property type="molecule type" value="Genomic_DNA"/>
</dbReference>
<dbReference type="EMBL" id="AY945934">
    <property type="protein sequence ID" value="AAX20114.1"/>
    <property type="molecule type" value="Genomic_DNA"/>
</dbReference>
<dbReference type="EMBL" id="AK312970">
    <property type="protein sequence ID" value="BAG35809.1"/>
    <property type="molecule type" value="mRNA"/>
</dbReference>
<dbReference type="EMBL" id="CH471094">
    <property type="protein sequence ID" value="EAW96420.1"/>
    <property type="molecule type" value="Genomic_DNA"/>
</dbReference>
<dbReference type="EMBL" id="BC114376">
    <property type="protein sequence ID" value="AAI14377.1"/>
    <property type="molecule type" value="mRNA"/>
</dbReference>
<dbReference type="CCDS" id="CCDS8685.1"/>
<dbReference type="RefSeq" id="NP_006437.3">
    <property type="nucleotide sequence ID" value="NM_006446.4"/>
</dbReference>
<dbReference type="PDB" id="8HNB">
    <property type="method" value="EM"/>
    <property type="resolution" value="3.53 A"/>
    <property type="chains" value="A=1-691"/>
</dbReference>
<dbReference type="PDB" id="8HNC">
    <property type="method" value="EM"/>
    <property type="resolution" value="3.73 A"/>
    <property type="chains" value="A=1-691"/>
</dbReference>
<dbReference type="PDB" id="8HND">
    <property type="method" value="EM"/>
    <property type="resolution" value="3.19 A"/>
    <property type="chains" value="A=1-691"/>
</dbReference>
<dbReference type="PDB" id="8HNH">
    <property type="method" value="EM"/>
    <property type="resolution" value="3.73 A"/>
    <property type="chains" value="A=1-691"/>
</dbReference>
<dbReference type="PDB" id="8K6L">
    <property type="method" value="EM"/>
    <property type="resolution" value="2.92 A"/>
    <property type="chains" value="A=1-691"/>
</dbReference>
<dbReference type="PDB" id="8PHW">
    <property type="method" value="EM"/>
    <property type="resolution" value="3.60 A"/>
    <property type="chains" value="A=1-691"/>
</dbReference>
<dbReference type="PDBsum" id="8HNB"/>
<dbReference type="PDBsum" id="8HNC"/>
<dbReference type="PDBsum" id="8HND"/>
<dbReference type="PDBsum" id="8HNH"/>
<dbReference type="PDBsum" id="8K6L"/>
<dbReference type="PDBsum" id="8PHW"/>
<dbReference type="EMDB" id="EMD-17677"/>
<dbReference type="EMDB" id="EMD-34909"/>
<dbReference type="EMDB" id="EMD-34910"/>
<dbReference type="EMDB" id="EMD-34911"/>
<dbReference type="EMDB" id="EMD-34913"/>
<dbReference type="EMDB" id="EMD-36922"/>
<dbReference type="SMR" id="Q9Y6L6"/>
<dbReference type="BioGRID" id="115847">
    <property type="interactions" value="16"/>
</dbReference>
<dbReference type="FunCoup" id="Q9Y6L6">
    <property type="interactions" value="19"/>
</dbReference>
<dbReference type="IntAct" id="Q9Y6L6">
    <property type="interactions" value="14"/>
</dbReference>
<dbReference type="STRING" id="9606.ENSP00000256958"/>
<dbReference type="BindingDB" id="Q9Y6L6"/>
<dbReference type="ChEMBL" id="CHEMBL1697668"/>
<dbReference type="DrugBank" id="DB05812">
    <property type="generic name" value="Abiraterone"/>
</dbReference>
<dbReference type="DrugBank" id="DB06151">
    <property type="generic name" value="Acetylcysteine"/>
</dbReference>
<dbReference type="DrugBank" id="DB06403">
    <property type="generic name" value="Ambrisentan"/>
</dbReference>
<dbReference type="DrugBank" id="DB00701">
    <property type="generic name" value="Amprenavir"/>
</dbReference>
<dbReference type="DrugBank" id="DB11901">
    <property type="generic name" value="Apalutamide"/>
</dbReference>
<dbReference type="DrugBank" id="DB09274">
    <property type="generic name" value="Artesunate"/>
</dbReference>
<dbReference type="DrugBank" id="DB12597">
    <property type="generic name" value="Asciminib"/>
</dbReference>
<dbReference type="DrugBank" id="DB11586">
    <property type="generic name" value="Asunaprevir"/>
</dbReference>
<dbReference type="DrugBank" id="DB01072">
    <property type="generic name" value="Atazanavir"/>
</dbReference>
<dbReference type="DrugBank" id="DB16098">
    <property type="generic name" value="Atogepant"/>
</dbReference>
<dbReference type="DrugBank" id="DB01076">
    <property type="generic name" value="Atorvastatin"/>
</dbReference>
<dbReference type="DrugBank" id="DB06626">
    <property type="generic name" value="Axitinib"/>
</dbReference>
<dbReference type="DrugBank" id="DB08857">
    <property type="generic name" value="Bamet-UD2"/>
</dbReference>
<dbReference type="DrugBank" id="DB00394">
    <property type="generic name" value="Beclomethasone dipropionate"/>
</dbReference>
<dbReference type="DrugBank" id="DB15719">
    <property type="generic name" value="Belantamab mafodotin"/>
</dbReference>
<dbReference type="DrugBank" id="DB16703">
    <property type="generic name" value="Belumosudil"/>
</dbReference>
<dbReference type="DrugBank" id="DB15463">
    <property type="generic name" value="Belzutifan"/>
</dbReference>
<dbReference type="DrugBank" id="DB11936">
    <property type="generic name" value="Bempedoic acid"/>
</dbReference>
<dbReference type="DrugBank" id="DB12319">
    <property type="generic name" value="Benzbromarone"/>
</dbReference>
<dbReference type="DrugBank" id="DB01053">
    <property type="generic name" value="Benzylpenicillin"/>
</dbReference>
<dbReference type="DrugBank" id="DB01393">
    <property type="generic name" value="Bezafibrate"/>
</dbReference>
<dbReference type="DrugBank" id="DB12151">
    <property type="generic name" value="Brincidofovir"/>
</dbReference>
<dbReference type="DrugBank" id="DB06772">
    <property type="generic name" value="Cabazitaxel"/>
</dbReference>
<dbReference type="DrugBank" id="DB13919">
    <property type="generic name" value="Candesartan"/>
</dbReference>
<dbReference type="DrugBank" id="DB12218">
    <property type="generic name" value="Capivasertib"/>
</dbReference>
<dbReference type="DrugBank" id="DB00520">
    <property type="generic name" value="Caspofungin"/>
</dbReference>
<dbReference type="DrugBank" id="DB04918">
    <property type="generic name" value="Ceftobiprole"/>
</dbReference>
<dbReference type="DrugBank" id="DB14733">
    <property type="generic name" value="Ceftobiprole medocaril"/>
</dbReference>
<dbReference type="DrugBank" id="DB00439">
    <property type="generic name" value="Cerivastatin"/>
</dbReference>
<dbReference type="DrugBank" id="DB08862">
    <property type="generic name" value="Cholecystokinin"/>
</dbReference>
<dbReference type="DrugBank" id="DB02659">
    <property type="generic name" value="Cholic Acid"/>
</dbReference>
<dbReference type="DrugBank" id="DB08858">
    <property type="generic name" value="cis-Diamminechlorocholylglycinateplatinum(II)"/>
</dbReference>
<dbReference type="DrugBank" id="DB01211">
    <property type="generic name" value="Clarithromycin"/>
</dbReference>
<dbReference type="DrugBank" id="DB00257">
    <property type="generic name" value="Clotrimazole"/>
</dbReference>
<dbReference type="DrugBank" id="DB09065">
    <property type="generic name" value="Cobicistat"/>
</dbReference>
<dbReference type="DrugBank" id="DB05239">
    <property type="generic name" value="Cobimetinib"/>
</dbReference>
<dbReference type="DrugBank" id="DB00286">
    <property type="generic name" value="Conjugated estrogens"/>
</dbReference>
<dbReference type="DrugBank" id="DB00091">
    <property type="generic name" value="Cyclosporine"/>
</dbReference>
<dbReference type="DrugBank" id="DB08912">
    <property type="generic name" value="Dabrafenib"/>
</dbReference>
<dbReference type="DrugBank" id="DB09102">
    <property type="generic name" value="Daclatasvir"/>
</dbReference>
<dbReference type="DrugBank" id="DB08856">
    <property type="generic name" value="DADLE"/>
</dbReference>
<dbReference type="DrugBank" id="DB11682">
    <property type="generic name" value="Daprodustat"/>
</dbReference>
<dbReference type="DrugBank" id="DB12941">
    <property type="generic name" value="Darolutamide"/>
</dbReference>
<dbReference type="DrugBank" id="DB01264">
    <property type="generic name" value="Darunavir"/>
</dbReference>
<dbReference type="DrugBank" id="DB00509">
    <property type="generic name" value="Dextrothyroxine"/>
</dbReference>
<dbReference type="DrugBank" id="DB00586">
    <property type="generic name" value="Diclofenac"/>
</dbReference>
<dbReference type="DrugBank" id="DB00255">
    <property type="generic name" value="Diethylstilbestrol"/>
</dbReference>
<dbReference type="DrugBank" id="DB00390">
    <property type="generic name" value="Digoxin"/>
</dbReference>
<dbReference type="DrugBank" id="DB00917">
    <property type="generic name" value="Dinoprostone"/>
</dbReference>
<dbReference type="DrugBank" id="DB08995">
    <property type="generic name" value="Diosmin"/>
</dbReference>
<dbReference type="DrugBank" id="DB00975">
    <property type="generic name" value="Dipyridamole"/>
</dbReference>
<dbReference type="DrugBank" id="DB05928">
    <property type="generic name" value="Dovitinib"/>
</dbReference>
<dbReference type="DrugBank" id="DB04855">
    <property type="generic name" value="Dronedarone"/>
</dbReference>
<dbReference type="DrugBank" id="DB11979">
    <property type="generic name" value="Elagolix"/>
</dbReference>
<dbReference type="DrugBank" id="DB15444">
    <property type="generic name" value="Elexacaftor"/>
</dbReference>
<dbReference type="DrugBank" id="DB06210">
    <property type="generic name" value="Eltrombopag"/>
</dbReference>
<dbReference type="DrugBank" id="DB09272">
    <property type="generic name" value="Eluxadoline"/>
</dbReference>
<dbReference type="DrugBank" id="DB09038">
    <property type="generic name" value="Empagliflozin"/>
</dbReference>
<dbReference type="DrugBank" id="DB13874">
    <property type="generic name" value="Enasidenib"/>
</dbReference>
<dbReference type="DrugBank" id="DB11718">
    <property type="generic name" value="Encorafenib"/>
</dbReference>
<dbReference type="DrugBank" id="DB00199">
    <property type="generic name" value="Erythromycin"/>
</dbReference>
<dbReference type="DrugBank" id="DB00783">
    <property type="generic name" value="Estradiol"/>
</dbReference>
<dbReference type="DrugBank" id="DB13952">
    <property type="generic name" value="Estradiol acetate"/>
</dbReference>
<dbReference type="DrugBank" id="DB13953">
    <property type="generic name" value="Estradiol benzoate"/>
</dbReference>
<dbReference type="DrugBank" id="DB13954">
    <property type="generic name" value="Estradiol cypionate"/>
</dbReference>
<dbReference type="DrugBank" id="DB13955">
    <property type="generic name" value="Estradiol dienanthate"/>
</dbReference>
<dbReference type="DrugBank" id="DB13956">
    <property type="generic name" value="Estradiol valerate"/>
</dbReference>
<dbReference type="DrugBank" id="DB00655">
    <property type="generic name" value="Estrone"/>
</dbReference>
<dbReference type="DrugBank" id="DB01590">
    <property type="generic name" value="Everolimus"/>
</dbReference>
<dbReference type="DrugBank" id="DB00973">
    <property type="generic name" value="Ezetimibe"/>
</dbReference>
<dbReference type="DrugBank" id="DB12500">
    <property type="generic name" value="Fedratinib"/>
</dbReference>
<dbReference type="DrugBank" id="DB12265">
    <property type="generic name" value="Fexinidazole"/>
</dbReference>
<dbReference type="DrugBank" id="DB00950">
    <property type="generic name" value="Fexofenadine"/>
</dbReference>
<dbReference type="DrugBank" id="DB09279">
    <property type="generic name" value="Fimasartan"/>
</dbReference>
<dbReference type="DrugBank" id="DB13867">
    <property type="generic name" value="Fluticasone"/>
</dbReference>
<dbReference type="DrugBank" id="DB08906">
    <property type="generic name" value="Fluticasone furoate"/>
</dbReference>
<dbReference type="DrugBank" id="DB00588">
    <property type="generic name" value="Fluticasone propionate"/>
</dbReference>
<dbReference type="DrugBank" id="DB01095">
    <property type="generic name" value="Fluvastatin"/>
</dbReference>
<dbReference type="DrugBank" id="DB11796">
    <property type="generic name" value="Fostemsavir"/>
</dbReference>
<dbReference type="DrugBank" id="DB02703">
    <property type="generic name" value="Fusidic acid"/>
</dbReference>
<dbReference type="DrugBank" id="DB08884">
    <property type="generic name" value="Gadoxetic acid"/>
</dbReference>
<dbReference type="DrugBank" id="DB01241">
    <property type="generic name" value="Gemfibrozil"/>
</dbReference>
<dbReference type="DrugBank" id="DB01645">
    <property type="generic name" value="Genistein"/>
</dbReference>
<dbReference type="DrugBank" id="DB06721">
    <property type="generic name" value="Gimatecan"/>
</dbReference>
<dbReference type="DrugBank" id="DB13879">
    <property type="generic name" value="Glecaprevir"/>
</dbReference>
<dbReference type="DrugBank" id="DB02691">
    <property type="generic name" value="Glycocholic acid"/>
</dbReference>
<dbReference type="DrugBank" id="DB11575">
    <property type="generic name" value="Grazoprevir"/>
</dbReference>
<dbReference type="DrugBank" id="DB01005">
    <property type="generic name" value="Hydroxyurea"/>
</dbReference>
<dbReference type="DrugBank" id="DB01892">
    <property type="generic name" value="Hyperforin"/>
</dbReference>
<dbReference type="DrugBank" id="DB09054">
    <property type="generic name" value="Idelalisib"/>
</dbReference>
<dbReference type="DrugBank" id="DB14909">
    <property type="generic name" value="Imetelstat"/>
</dbReference>
<dbReference type="DrugBank" id="DB00224">
    <property type="generic name" value="Indinavir"/>
</dbReference>
<dbReference type="DrugBank" id="DB00328">
    <property type="generic name" value="Indomethacin"/>
</dbReference>
<dbReference type="DrugBank" id="DB11886">
    <property type="generic name" value="Infigratinib"/>
</dbReference>
<dbReference type="DrugBank" id="DB00762">
    <property type="generic name" value="Irinotecan"/>
</dbReference>
<dbReference type="DrugBank" id="DB11757">
    <property type="generic name" value="Istradefylline"/>
</dbReference>
<dbReference type="DrugBank" id="DB00602">
    <property type="generic name" value="Ivermectin"/>
</dbReference>
<dbReference type="DrugBank" id="DB01026">
    <property type="generic name" value="Ketoconazole"/>
</dbReference>
<dbReference type="DrugBank" id="DB16217">
    <property type="generic name" value="Leniolisib"/>
</dbReference>
<dbReference type="DrugBank" id="DB09078">
    <property type="generic name" value="Lenvatinib"/>
</dbReference>
<dbReference type="DrugBank" id="DB12070">
    <property type="generic name" value="Letermovir"/>
</dbReference>
<dbReference type="DrugBank" id="DB08855">
    <property type="generic name" value="Leukotriene C4"/>
</dbReference>
<dbReference type="DrugBank" id="DB00583">
    <property type="generic name" value="Levocarnitine"/>
</dbReference>
<dbReference type="DrugBank" id="DB13153">
    <property type="generic name" value="Levomenol"/>
</dbReference>
<dbReference type="DrugBank" id="DB13139">
    <property type="generic name" value="Levosalbutamol"/>
</dbReference>
<dbReference type="DrugBank" id="DB00451">
    <property type="generic name" value="Levothyroxine"/>
</dbReference>
<dbReference type="DrugBank" id="DB17083">
    <property type="generic name" value="Linzagolix"/>
</dbReference>
<dbReference type="DrugBank" id="DB00279">
    <property type="generic name" value="Liothyronine"/>
</dbReference>
<dbReference type="DrugBank" id="DB01583">
    <property type="generic name" value="Liotrix"/>
</dbReference>
<dbReference type="DrugBank" id="DB09198">
    <property type="generic name" value="Lobeglitazone"/>
</dbReference>
<dbReference type="DrugBank" id="DB06448">
    <property type="generic name" value="Lonafarnib"/>
</dbReference>
<dbReference type="DrugBank" id="DB01601">
    <property type="generic name" value="Lopinavir"/>
</dbReference>
<dbReference type="DrugBank" id="DB00227">
    <property type="generic name" value="Lovastatin"/>
</dbReference>
<dbReference type="DrugBank" id="DB12674">
    <property type="generic name" value="Lurbinectedin"/>
</dbReference>
<dbReference type="DrugBank" id="DB00244">
    <property type="generic name" value="Mesalazine"/>
</dbReference>
<dbReference type="DrugBank" id="DB00563">
    <property type="generic name" value="Methotrexate"/>
</dbReference>
<dbReference type="DrugBank" id="DB00834">
    <property type="generic name" value="Mifepristone"/>
</dbReference>
<dbReference type="DrugBank" id="DB11763">
    <property type="generic name" value="Momelotinib"/>
</dbReference>
<dbReference type="DrugBank" id="DB00688">
    <property type="generic name" value="Mycophenolate mofetil"/>
</dbReference>
<dbReference type="DrugBank" id="DB00220">
    <property type="generic name" value="Nelfinavir"/>
</dbReference>
<dbReference type="DrugBank" id="DB00622">
    <property type="generic name" value="Nicardipine"/>
</dbReference>
<dbReference type="DrugBank" id="DB01115">
    <property type="generic name" value="Nifedipine"/>
</dbReference>
<dbReference type="DrugBank" id="DB04868">
    <property type="generic name" value="Nilotinib"/>
</dbReference>
<dbReference type="DrugBank" id="DB01051">
    <property type="generic name" value="Novobiocin"/>
</dbReference>
<dbReference type="DrugBank" id="DB00646">
    <property type="generic name" value="Nystatin"/>
</dbReference>
<dbReference type="DrugBank" id="DB00275">
    <property type="generic name" value="Olmesartan"/>
</dbReference>
<dbReference type="DrugBank" id="DB16267">
    <property type="generic name" value="Olutasidenib"/>
</dbReference>
<dbReference type="DrugBank" id="DB11632">
    <property type="generic name" value="Opicapone"/>
</dbReference>
<dbReference type="DrugBank" id="DB11837">
    <property type="generic name" value="Osilodrostat"/>
</dbReference>
<dbReference type="DrugBank" id="DB01092">
    <property type="generic name" value="Ouabain"/>
</dbReference>
<dbReference type="DrugBank" id="DB15575">
    <property type="generic name" value="Padeliporfin"/>
</dbReference>
<dbReference type="DrugBank" id="DB15413">
    <property type="generic name" value="Pafolacianine"/>
</dbReference>
<dbReference type="DrugBank" id="DB05467">
    <property type="generic name" value="Palovarotene"/>
</dbReference>
<dbReference type="DrugBank" id="DB09297">
    <property type="generic name" value="Paritaprevir"/>
</dbReference>
<dbReference type="DrugBank" id="DB06589">
    <property type="generic name" value="Pazopanib"/>
</dbReference>
<dbReference type="DrugBank" id="DB00859">
    <property type="generic name" value="Penicillamine"/>
</dbReference>
<dbReference type="DrugBank" id="DB12978">
    <property type="generic name" value="Pexidartinib"/>
</dbReference>
<dbReference type="DrugBank" id="DB13878">
    <property type="generic name" value="Pibrentasvir"/>
</dbReference>
<dbReference type="DrugBank" id="DB01132">
    <property type="generic name" value="Pioglitazone"/>
</dbReference>
<dbReference type="DrugBank" id="DB08860">
    <property type="generic name" value="Pitavastatin"/>
</dbReference>
<dbReference type="DrugBank" id="DB04850">
    <property type="generic name" value="Posizolid"/>
</dbReference>
<dbReference type="DrugBank" id="DB15822">
    <property type="generic name" value="Pralsetinib"/>
</dbReference>
<dbReference type="DrugBank" id="DB01708">
    <property type="generic name" value="Prasterone"/>
</dbReference>
<dbReference type="DrugBank" id="DB05804">
    <property type="generic name" value="Prasterone sulfate"/>
</dbReference>
<dbReference type="DrugBank" id="DB00175">
    <property type="generic name" value="Pravastatin"/>
</dbReference>
<dbReference type="DrugBank" id="DB00396">
    <property type="generic name" value="Progesterone"/>
</dbReference>
<dbReference type="DrugBank" id="DB04216">
    <property type="generic name" value="Quercetin"/>
</dbReference>
<dbReference type="DrugBank" id="DB00908">
    <property type="generic name" value="Quinidine"/>
</dbReference>
<dbReference type="DrugBank" id="DB00468">
    <property type="generic name" value="Quinine"/>
</dbReference>
<dbReference type="DrugBank" id="DB00481">
    <property type="generic name" value="Raloxifene"/>
</dbReference>
<dbReference type="DrugBank" id="DB14761">
    <property type="generic name" value="Remdesivir"/>
</dbReference>
<dbReference type="DrugBank" id="DB00912">
    <property type="generic name" value="Repaglinide"/>
</dbReference>
<dbReference type="DrugBank" id="DB16826">
    <property type="generic name" value="Repotrectinib"/>
</dbReference>
<dbReference type="DrugBank" id="DB00206">
    <property type="generic name" value="Reserpine"/>
</dbReference>
<dbReference type="DrugBank" id="DB12914">
    <property type="generic name" value="Resmetirom"/>
</dbReference>
<dbReference type="DrugBank" id="DB11855">
    <property type="generic name" value="Revefenacin"/>
</dbReference>
<dbReference type="DrugBank" id="DB01045">
    <property type="generic name" value="Rifampin"/>
</dbReference>
<dbReference type="DrugBank" id="DB11753">
    <property type="generic name" value="Rifamycin"/>
</dbReference>
<dbReference type="DrugBank" id="DB08864">
    <property type="generic name" value="Rilpivirine"/>
</dbReference>
<dbReference type="DrugBank" id="DB12457">
    <property type="generic name" value="Rimegepant"/>
</dbReference>
<dbReference type="DrugBank" id="DB00503">
    <property type="generic name" value="Ritonavir"/>
</dbReference>
<dbReference type="DrugBank" id="DB06176">
    <property type="generic name" value="Romidepsin"/>
</dbReference>
<dbReference type="DrugBank" id="DB00412">
    <property type="generic name" value="Rosiglitazone"/>
</dbReference>
<dbReference type="DrugBank" id="DB01098">
    <property type="generic name" value="Rosuvastatin"/>
</dbReference>
<dbReference type="DrugBank" id="DB04847">
    <property type="generic name" value="Roxadustat"/>
</dbReference>
<dbReference type="DrugBank" id="DB12332">
    <property type="generic name" value="Rucaparib"/>
</dbReference>
<dbReference type="DrugBank" id="DB09292">
    <property type="generic name" value="Sacubitril"/>
</dbReference>
<dbReference type="DrugBank" id="DB01232">
    <property type="generic name" value="Saquinavir"/>
</dbReference>
<dbReference type="DrugBank" id="DB11362">
    <property type="generic name" value="Selexipag"/>
</dbReference>
<dbReference type="DrugBank" id="DB00203">
    <property type="generic name" value="Sildenafil"/>
</dbReference>
<dbReference type="DrugBank" id="DB09298">
    <property type="generic name" value="Silibinin"/>
</dbReference>
<dbReference type="DrugBank" id="DB06290">
    <property type="generic name" value="Simeprevir"/>
</dbReference>
<dbReference type="DrugBank" id="DB00641">
    <property type="generic name" value="Simvastatin"/>
</dbReference>
<dbReference type="DrugBank" id="DB00877">
    <property type="generic name" value="Sirolimus"/>
</dbReference>
<dbReference type="DrugBank" id="DB00398">
    <property type="generic name" value="Sorafenib"/>
</dbReference>
<dbReference type="DrugBank" id="DB12713">
    <property type="generic name" value="Sotagliflozin"/>
</dbReference>
<dbReference type="DrugBank" id="DB00795">
    <property type="generic name" value="Sulfasalazine"/>
</dbReference>
<dbReference type="DrugBank" id="DB00669">
    <property type="generic name" value="Sumatriptan"/>
</dbReference>
<dbReference type="DrugBank" id="DB00864">
    <property type="generic name" value="Tacrolimus"/>
</dbReference>
<dbReference type="DrugBank" id="DB04348">
    <property type="generic name" value="Taurocholic acid"/>
</dbReference>
<dbReference type="DrugBank" id="DB09137">
    <property type="generic name" value="Technetium Tc-99m mebrofenin"/>
</dbReference>
<dbReference type="DrugBank" id="DB05521">
    <property type="generic name" value="Telaprevir"/>
</dbReference>
<dbReference type="DrugBank" id="DB00976">
    <property type="generic name" value="Telithromycin"/>
</dbReference>
<dbReference type="DrugBank" id="DB09299">
    <property type="generic name" value="Tenofovir alafenamide"/>
</dbReference>
<dbReference type="DrugBank" id="DB08880">
    <property type="generic name" value="Teriflunomide"/>
</dbReference>
<dbReference type="DrugBank" id="DB11712">
    <property type="generic name" value="Tezacaftor"/>
</dbReference>
<dbReference type="DrugBank" id="DB00932">
    <property type="generic name" value="Tipranavir"/>
</dbReference>
<dbReference type="DrugBank" id="DB06137">
    <property type="generic name" value="Tirbanibulin"/>
</dbReference>
<dbReference type="DrugBank" id="DB00214">
    <property type="generic name" value="Torasemide"/>
</dbReference>
<dbReference type="DrugBank" id="DB14962">
    <property type="generic name" value="Trastuzumab deruxtecan"/>
</dbReference>
<dbReference type="DrugBank" id="DB06045">
    <property type="generic name" value="Trofinetide"/>
</dbReference>
<dbReference type="DrugBank" id="DB00197">
    <property type="generic name" value="Troglitazone"/>
</dbReference>
<dbReference type="DrugBank" id="DB15328">
    <property type="generic name" value="Ubrogepant"/>
</dbReference>
<dbReference type="DrugBank" id="DB15091">
    <property type="generic name" value="Upadacitinib"/>
</dbReference>
<dbReference type="DrugBank" id="DB00177">
    <property type="generic name" value="Valsartan"/>
</dbReference>
<dbReference type="DrugBank" id="DB11869">
    <property type="generic name" value="Valspodar"/>
</dbReference>
<dbReference type="DrugBank" id="DB11613">
    <property type="generic name" value="Velpatasvir"/>
</dbReference>
<dbReference type="DrugBank" id="DB11581">
    <property type="generic name" value="Venetoclax"/>
</dbReference>
<dbReference type="DrugBank" id="DB00661">
    <property type="generic name" value="Verapamil"/>
</dbReference>
<dbReference type="DrugBank" id="DB00570">
    <property type="generic name" value="Vinblastine"/>
</dbReference>
<dbReference type="DrugBank" id="DB00541">
    <property type="generic name" value="Vincristine"/>
</dbReference>
<dbReference type="DrugBank" id="DB12026">
    <property type="generic name" value="Voxilaprevir"/>
</dbReference>
<dbReference type="DrugCentral" id="Q9Y6L6"/>
<dbReference type="GuidetoPHARMACOLOGY" id="1220"/>
<dbReference type="TCDB" id="2.A.60.1.5">
    <property type="family name" value="the organo anion transporter (oat) family"/>
</dbReference>
<dbReference type="GlyCosmos" id="Q9Y6L6">
    <property type="glycosylation" value="6 sites, No reported glycans"/>
</dbReference>
<dbReference type="GlyGen" id="Q9Y6L6">
    <property type="glycosylation" value="8 sites, 3 N-linked glycans (1 site)"/>
</dbReference>
<dbReference type="iPTMnet" id="Q9Y6L6"/>
<dbReference type="PhosphoSitePlus" id="Q9Y6L6"/>
<dbReference type="BioMuta" id="SLCO1B1"/>
<dbReference type="DMDM" id="12643959"/>
<dbReference type="jPOST" id="Q9Y6L6"/>
<dbReference type="MassIVE" id="Q9Y6L6"/>
<dbReference type="PaxDb" id="9606-ENSP00000256958"/>
<dbReference type="PeptideAtlas" id="Q9Y6L6"/>
<dbReference type="ProteomicsDB" id="86719"/>
<dbReference type="Antibodypedia" id="23997">
    <property type="antibodies" value="180 antibodies from 29 providers"/>
</dbReference>
<dbReference type="DNASU" id="10599"/>
<dbReference type="Ensembl" id="ENST00000256958.3">
    <property type="protein sequence ID" value="ENSP00000256958.2"/>
    <property type="gene ID" value="ENSG00000134538.3"/>
</dbReference>
<dbReference type="GeneID" id="10599"/>
<dbReference type="KEGG" id="hsa:10599"/>
<dbReference type="MANE-Select" id="ENST00000256958.3">
    <property type="protein sequence ID" value="ENSP00000256958.2"/>
    <property type="RefSeq nucleotide sequence ID" value="NM_006446.5"/>
    <property type="RefSeq protein sequence ID" value="NP_006437.3"/>
</dbReference>
<dbReference type="UCSC" id="uc001req.5">
    <property type="organism name" value="human"/>
</dbReference>
<dbReference type="AGR" id="HGNC:10959"/>
<dbReference type="CTD" id="10599"/>
<dbReference type="DisGeNET" id="10599"/>
<dbReference type="GeneCards" id="SLCO1B1"/>
<dbReference type="GeneReviews" id="SLCO1B1"/>
<dbReference type="HGNC" id="HGNC:10959">
    <property type="gene designation" value="SLCO1B1"/>
</dbReference>
<dbReference type="HPA" id="ENSG00000134538">
    <property type="expression patterns" value="Tissue enriched (liver)"/>
</dbReference>
<dbReference type="MalaCards" id="SLCO1B1"/>
<dbReference type="MIM" id="237450">
    <property type="type" value="phenotype"/>
</dbReference>
<dbReference type="MIM" id="604843">
    <property type="type" value="gene"/>
</dbReference>
<dbReference type="neXtProt" id="NX_Q9Y6L6"/>
<dbReference type="OpenTargets" id="ENSG00000134538"/>
<dbReference type="Orphanet" id="3111">
    <property type="disease" value="Rotor syndrome"/>
</dbReference>
<dbReference type="PharmGKB" id="PA134865839"/>
<dbReference type="VEuPathDB" id="HostDB:ENSG00000134538"/>
<dbReference type="eggNOG" id="KOG3626">
    <property type="taxonomic scope" value="Eukaryota"/>
</dbReference>
<dbReference type="GeneTree" id="ENSGT01130000278287"/>
<dbReference type="HOGENOM" id="CLU_008954_4_0_1"/>
<dbReference type="InParanoid" id="Q9Y6L6"/>
<dbReference type="OMA" id="ECPRDSQ"/>
<dbReference type="OrthoDB" id="5062115at2759"/>
<dbReference type="PAN-GO" id="Q9Y6L6">
    <property type="GO annotations" value="5 GO annotations based on evolutionary models"/>
</dbReference>
<dbReference type="PhylomeDB" id="Q9Y6L6"/>
<dbReference type="TreeFam" id="TF317540"/>
<dbReference type="PathwayCommons" id="Q9Y6L6"/>
<dbReference type="Reactome" id="R-HSA-159418">
    <property type="pathway name" value="Recycling of bile acids and salts"/>
</dbReference>
<dbReference type="Reactome" id="R-HSA-189483">
    <property type="pathway name" value="Heme degradation"/>
</dbReference>
<dbReference type="Reactome" id="R-HSA-5619110">
    <property type="pathway name" value="Defective SLCO1B1 causes hyperbilirubinemia, Rotor type (HBLRR)"/>
</dbReference>
<dbReference type="Reactome" id="R-HSA-879518">
    <property type="pathway name" value="Transport of organic anions"/>
</dbReference>
<dbReference type="Reactome" id="R-HSA-9754706">
    <property type="pathway name" value="Atorvastatin ADME"/>
</dbReference>
<dbReference type="SABIO-RK" id="Q9Y6L6"/>
<dbReference type="SignaLink" id="Q9Y6L6"/>
<dbReference type="BioGRID-ORCS" id="10599">
    <property type="hits" value="12 hits in 1138 CRISPR screens"/>
</dbReference>
<dbReference type="ChiTaRS" id="SLCO1B1">
    <property type="organism name" value="human"/>
</dbReference>
<dbReference type="GeneWiki" id="SLCO1B1"/>
<dbReference type="GenomeRNAi" id="10599"/>
<dbReference type="Pharos" id="Q9Y6L6">
    <property type="development level" value="Tchem"/>
</dbReference>
<dbReference type="PRO" id="PR:Q9Y6L6"/>
<dbReference type="Proteomes" id="UP000005640">
    <property type="component" value="Chromosome 12"/>
</dbReference>
<dbReference type="RNAct" id="Q9Y6L6">
    <property type="molecule type" value="protein"/>
</dbReference>
<dbReference type="Bgee" id="ENSG00000134538">
    <property type="expression patterns" value="Expressed in right lobe of liver and 26 other cell types or tissues"/>
</dbReference>
<dbReference type="ExpressionAtlas" id="Q9Y6L6">
    <property type="expression patterns" value="baseline and differential"/>
</dbReference>
<dbReference type="GO" id="GO:0009925">
    <property type="term" value="C:basal plasma membrane"/>
    <property type="evidence" value="ECO:0000314"/>
    <property type="project" value="UniProtKB"/>
</dbReference>
<dbReference type="GO" id="GO:0016323">
    <property type="term" value="C:basolateral plasma membrane"/>
    <property type="evidence" value="ECO:0000318"/>
    <property type="project" value="GO_Central"/>
</dbReference>
<dbReference type="GO" id="GO:0016020">
    <property type="term" value="C:membrane"/>
    <property type="evidence" value="ECO:0000304"/>
    <property type="project" value="ProtInc"/>
</dbReference>
<dbReference type="GO" id="GO:0005886">
    <property type="term" value="C:plasma membrane"/>
    <property type="evidence" value="ECO:0000314"/>
    <property type="project" value="HPA"/>
</dbReference>
<dbReference type="GO" id="GO:0015125">
    <property type="term" value="F:bile acid transmembrane transporter activity"/>
    <property type="evidence" value="ECO:0000318"/>
    <property type="project" value="GO_Central"/>
</dbReference>
<dbReference type="GO" id="GO:0008514">
    <property type="term" value="F:organic anion transmembrane transporter activity"/>
    <property type="evidence" value="ECO:0000314"/>
    <property type="project" value="UniProtKB"/>
</dbReference>
<dbReference type="GO" id="GO:0015132">
    <property type="term" value="F:prostaglandin transmembrane transporter activity"/>
    <property type="evidence" value="ECO:0000314"/>
    <property type="project" value="UniProtKB"/>
</dbReference>
<dbReference type="GO" id="GO:0015347">
    <property type="term" value="F:sodium-independent organic anion transmembrane transporter activity"/>
    <property type="evidence" value="ECO:0000318"/>
    <property type="project" value="GO_Central"/>
</dbReference>
<dbReference type="GO" id="GO:0015349">
    <property type="term" value="F:thyroid hormone transmembrane transporter activity"/>
    <property type="evidence" value="ECO:0000304"/>
    <property type="project" value="Reactome"/>
</dbReference>
<dbReference type="GO" id="GO:0015721">
    <property type="term" value="P:bile acid and bile salt transport"/>
    <property type="evidence" value="ECO:0000318"/>
    <property type="project" value="GO_Central"/>
</dbReference>
<dbReference type="GO" id="GO:0042167">
    <property type="term" value="P:heme catabolic process"/>
    <property type="evidence" value="ECO:0000304"/>
    <property type="project" value="Reactome"/>
</dbReference>
<dbReference type="GO" id="GO:0006811">
    <property type="term" value="P:monoatomic ion transport"/>
    <property type="evidence" value="ECO:0007669"/>
    <property type="project" value="UniProtKB-KW"/>
</dbReference>
<dbReference type="GO" id="GO:0015711">
    <property type="term" value="P:organic anion transport"/>
    <property type="evidence" value="ECO:0000304"/>
    <property type="project" value="ProtInc"/>
</dbReference>
<dbReference type="GO" id="GO:0043252">
    <property type="term" value="P:sodium-independent organic anion transport"/>
    <property type="evidence" value="ECO:0000318"/>
    <property type="project" value="GO_Central"/>
</dbReference>
<dbReference type="GO" id="GO:0006805">
    <property type="term" value="P:xenobiotic metabolic process"/>
    <property type="evidence" value="ECO:0000304"/>
    <property type="project" value="Reactome"/>
</dbReference>
<dbReference type="Gene3D" id="3.30.60.30">
    <property type="match status" value="1"/>
</dbReference>
<dbReference type="Gene3D" id="1.20.1250.20">
    <property type="entry name" value="MFS general substrate transporter like domains"/>
    <property type="match status" value="1"/>
</dbReference>
<dbReference type="InterPro" id="IPR002350">
    <property type="entry name" value="Kazal_dom"/>
</dbReference>
<dbReference type="InterPro" id="IPR036058">
    <property type="entry name" value="Kazal_dom_sf"/>
</dbReference>
<dbReference type="InterPro" id="IPR020846">
    <property type="entry name" value="MFS_dom"/>
</dbReference>
<dbReference type="InterPro" id="IPR036259">
    <property type="entry name" value="MFS_trans_sf"/>
</dbReference>
<dbReference type="InterPro" id="IPR004156">
    <property type="entry name" value="OATP"/>
</dbReference>
<dbReference type="NCBIfam" id="TIGR00805">
    <property type="entry name" value="oat"/>
    <property type="match status" value="1"/>
</dbReference>
<dbReference type="PANTHER" id="PTHR11388">
    <property type="entry name" value="ORGANIC ANION TRANSPORTER"/>
    <property type="match status" value="1"/>
</dbReference>
<dbReference type="PANTHER" id="PTHR11388:SF82">
    <property type="entry name" value="SOLUTE CARRIER ORGANIC ANION TRANSPORTER FAMILY MEMBER 1B1"/>
    <property type="match status" value="1"/>
</dbReference>
<dbReference type="Pfam" id="PF07648">
    <property type="entry name" value="Kazal_2"/>
    <property type="match status" value="1"/>
</dbReference>
<dbReference type="Pfam" id="PF03137">
    <property type="entry name" value="OATP"/>
    <property type="match status" value="1"/>
</dbReference>
<dbReference type="SUPFAM" id="SSF100895">
    <property type="entry name" value="Kazal-type serine protease inhibitors"/>
    <property type="match status" value="1"/>
</dbReference>
<dbReference type="SUPFAM" id="SSF103473">
    <property type="entry name" value="MFS general substrate transporter"/>
    <property type="match status" value="1"/>
</dbReference>
<dbReference type="PROSITE" id="PS51465">
    <property type="entry name" value="KAZAL_2"/>
    <property type="match status" value="1"/>
</dbReference>
<dbReference type="PROSITE" id="PS50850">
    <property type="entry name" value="MFS"/>
    <property type="match status" value="1"/>
</dbReference>
<evidence type="ECO:0000255" key="1"/>
<evidence type="ECO:0000255" key="2">
    <source>
        <dbReference type="PROSITE-ProRule" id="PRU00798"/>
    </source>
</evidence>
<evidence type="ECO:0000269" key="3">
    <source>
    </source>
</evidence>
<evidence type="ECO:0000269" key="4">
    <source>
    </source>
</evidence>
<evidence type="ECO:0000269" key="5">
    <source>
    </source>
</evidence>
<evidence type="ECO:0000269" key="6">
    <source>
    </source>
</evidence>
<evidence type="ECO:0000269" key="7">
    <source>
    </source>
</evidence>
<evidence type="ECO:0000269" key="8">
    <source>
    </source>
</evidence>
<evidence type="ECO:0000269" key="9">
    <source>
    </source>
</evidence>
<evidence type="ECO:0000269" key="10">
    <source>
    </source>
</evidence>
<evidence type="ECO:0000269" key="11">
    <source>
    </source>
</evidence>
<evidence type="ECO:0000269" key="12">
    <source>
    </source>
</evidence>
<evidence type="ECO:0000269" key="13">
    <source>
    </source>
</evidence>
<evidence type="ECO:0000269" key="14">
    <source>
    </source>
</evidence>
<evidence type="ECO:0000269" key="15">
    <source>
    </source>
</evidence>
<evidence type="ECO:0000269" key="16">
    <source>
    </source>
</evidence>
<evidence type="ECO:0000269" key="17">
    <source>
    </source>
</evidence>
<evidence type="ECO:0000269" key="18">
    <source>
    </source>
</evidence>
<evidence type="ECO:0000269" key="19">
    <source>
    </source>
</evidence>
<evidence type="ECO:0000269" key="20">
    <source>
    </source>
</evidence>
<evidence type="ECO:0000269" key="21">
    <source>
    </source>
</evidence>
<evidence type="ECO:0000269" key="22">
    <source>
    </source>
</evidence>
<evidence type="ECO:0000269" key="23">
    <source>
    </source>
</evidence>
<evidence type="ECO:0000269" key="24">
    <source ref="6"/>
</evidence>
<evidence type="ECO:0000303" key="25">
    <source>
    </source>
</evidence>
<evidence type="ECO:0000303" key="26">
    <source>
    </source>
</evidence>
<evidence type="ECO:0000303" key="27">
    <source>
    </source>
</evidence>
<evidence type="ECO:0000305" key="28"/>
<evidence type="ECO:0000305" key="29">
    <source>
    </source>
</evidence>
<evidence type="ECO:0000305" key="30">
    <source>
    </source>
</evidence>
<evidence type="ECO:0007744" key="31">
    <source>
    </source>
</evidence>
<evidence type="ECO:0007829" key="32">
    <source>
        <dbReference type="PDB" id="8HND"/>
    </source>
</evidence>
<evidence type="ECO:0007829" key="33">
    <source>
        <dbReference type="PDB" id="8K6L"/>
    </source>
</evidence>
<protein>
    <recommendedName>
        <fullName>Solute carrier organic anion transporter family member 1B1</fullName>
        <shortName>SLCO1B1</shortName>
    </recommendedName>
    <alternativeName>
        <fullName>Liver-specific organic anion transporter 1</fullName>
        <shortName evidence="25">LST-1</shortName>
    </alternativeName>
    <alternativeName>
        <fullName evidence="27">OATP-C</fullName>
    </alternativeName>
    <alternativeName>
        <fullName evidence="27">Organic anion transporter SLC21A6</fullName>
    </alternativeName>
    <alternativeName>
        <fullName>Sodium-independent organic anion-transporting polypeptide 2</fullName>
        <shortName evidence="26 27">OATP-2</shortName>
    </alternativeName>
    <alternativeName>
        <fullName>Solute carrier family 21 member 6</fullName>
    </alternativeName>
</protein>
<organism>
    <name type="scientific">Homo sapiens</name>
    <name type="common">Human</name>
    <dbReference type="NCBI Taxonomy" id="9606"/>
    <lineage>
        <taxon>Eukaryota</taxon>
        <taxon>Metazoa</taxon>
        <taxon>Chordata</taxon>
        <taxon>Craniata</taxon>
        <taxon>Vertebrata</taxon>
        <taxon>Euteleostomi</taxon>
        <taxon>Mammalia</taxon>
        <taxon>Eutheria</taxon>
        <taxon>Euarchontoglires</taxon>
        <taxon>Primates</taxon>
        <taxon>Haplorrhini</taxon>
        <taxon>Catarrhini</taxon>
        <taxon>Hominidae</taxon>
        <taxon>Homo</taxon>
    </lineage>
</organism>
<reference key="1">
    <citation type="journal article" date="1999" name="J. Biol. Chem.">
        <title>Identification of a novel gene family encoding human liver-specific organic anion transporter LST-1.</title>
        <authorList>
            <person name="Abe T."/>
            <person name="Kakyo M."/>
            <person name="Tokui T."/>
            <person name="Nakagomi R."/>
            <person name="Nishio T."/>
            <person name="Nakai D."/>
            <person name="Nomura H."/>
            <person name="Unno M."/>
            <person name="Suzuki M."/>
            <person name="Naitoh T."/>
            <person name="Matsuno S."/>
            <person name="Yawo H."/>
        </authorList>
    </citation>
    <scope>NUCLEOTIDE SEQUENCE [MRNA]</scope>
    <scope>FUNCTION</scope>
    <scope>TRANSPORTER ACTIVITY</scope>
    <scope>BIOPHYSICOCHEMICAL PROPERTIES</scope>
    <scope>TISSUE SPECIFICITY</scope>
    <scope>VARIANTS LYS-152 AND ASN-241</scope>
    <source>
        <tissue>Liver</tissue>
    </source>
</reference>
<reference key="2">
    <citation type="journal article" date="1999" name="J. Biol. Chem.">
        <title>A novel human hepatic organic anion transporting polypeptide (OATP2). Identification of a liver-specific human organic anion transporting polypeptide and identification of rat and human hydroxymethylglutaryl-CoA reductase inhibitor transporters.</title>
        <authorList>
            <person name="Hsiang B.H."/>
            <person name="Zhu Y."/>
            <person name="Wang Z."/>
            <person name="Wu Y."/>
            <person name="Sasseville V."/>
            <person name="Yang W.-P."/>
            <person name="Kirchgessner T.G."/>
        </authorList>
    </citation>
    <scope>NUCLEOTIDE SEQUENCE [MRNA]</scope>
    <scope>FUNCTION</scope>
    <scope>TISSUE SPECIFICITY</scope>
    <scope>VARIANT ASP-130</scope>
    <scope>TRANSPORTER ACTIVITY</scope>
    <scope>BIOPHYSICOCHEMICAL PROPERTIES</scope>
    <source>
        <tissue>Liver</tissue>
    </source>
</reference>
<reference key="3">
    <citation type="journal article" date="2000" name="Am. J. Physiol.">
        <title>A novel human organic anion transporting polypeptide localized to the basolateral hepatocyte membrane.</title>
        <authorList>
            <person name="Koenig J."/>
            <person name="Cui Y."/>
            <person name="Nies A.T."/>
            <person name="Keppler D."/>
        </authorList>
    </citation>
    <scope>NUCLEOTIDE SEQUENCE [MRNA]</scope>
    <source>
        <tissue>Liver</tissue>
    </source>
</reference>
<reference key="4">
    <citation type="submission" date="1999-04" db="EMBL/GenBank/DDBJ databases">
        <authorList>
            <person name="Nezu J."/>
        </authorList>
    </citation>
    <scope>NUCLEOTIDE SEQUENCE [MRNA]</scope>
    <source>
        <tissue>Liver</tissue>
    </source>
</reference>
<reference key="5">
    <citation type="journal article" date="2000" name="J. Biol. Chem.">
        <title>Localization and genomic organization of a new hepatocellular organic anion transporting polypeptide.</title>
        <authorList>
            <person name="Koenig J."/>
            <person name="Cui Y."/>
            <person name="Nies A.T."/>
            <person name="Keppler D."/>
        </authorList>
    </citation>
    <scope>NUCLEOTIDE SEQUENCE [GENOMIC DNA]</scope>
</reference>
<reference key="6">
    <citation type="submission" date="2005-02" db="EMBL/GenBank/DDBJ databases">
        <authorList>
            <consortium name="SeattleSNPs variation discovery resource"/>
        </authorList>
    </citation>
    <scope>NUCLEOTIDE SEQUENCE [GENOMIC DNA]</scope>
    <scope>VARIANT ASP-130</scope>
</reference>
<reference key="7">
    <citation type="journal article" date="2004" name="Nat. Genet.">
        <title>Complete sequencing and characterization of 21,243 full-length human cDNAs.</title>
        <authorList>
            <person name="Ota T."/>
            <person name="Suzuki Y."/>
            <person name="Nishikawa T."/>
            <person name="Otsuki T."/>
            <person name="Sugiyama T."/>
            <person name="Irie R."/>
            <person name="Wakamatsu A."/>
            <person name="Hayashi K."/>
            <person name="Sato H."/>
            <person name="Nagai K."/>
            <person name="Kimura K."/>
            <person name="Makita H."/>
            <person name="Sekine M."/>
            <person name="Obayashi M."/>
            <person name="Nishi T."/>
            <person name="Shibahara T."/>
            <person name="Tanaka T."/>
            <person name="Ishii S."/>
            <person name="Yamamoto J."/>
            <person name="Saito K."/>
            <person name="Kawai Y."/>
            <person name="Isono Y."/>
            <person name="Nakamura Y."/>
            <person name="Nagahari K."/>
            <person name="Murakami K."/>
            <person name="Yasuda T."/>
            <person name="Iwayanagi T."/>
            <person name="Wagatsuma M."/>
            <person name="Shiratori A."/>
            <person name="Sudo H."/>
            <person name="Hosoiri T."/>
            <person name="Kaku Y."/>
            <person name="Kodaira H."/>
            <person name="Kondo H."/>
            <person name="Sugawara M."/>
            <person name="Takahashi M."/>
            <person name="Kanda K."/>
            <person name="Yokoi T."/>
            <person name="Furuya T."/>
            <person name="Kikkawa E."/>
            <person name="Omura Y."/>
            <person name="Abe K."/>
            <person name="Kamihara K."/>
            <person name="Katsuta N."/>
            <person name="Sato K."/>
            <person name="Tanikawa M."/>
            <person name="Yamazaki M."/>
            <person name="Ninomiya K."/>
            <person name="Ishibashi T."/>
            <person name="Yamashita H."/>
            <person name="Murakawa K."/>
            <person name="Fujimori K."/>
            <person name="Tanai H."/>
            <person name="Kimata M."/>
            <person name="Watanabe M."/>
            <person name="Hiraoka S."/>
            <person name="Chiba Y."/>
            <person name="Ishida S."/>
            <person name="Ono Y."/>
            <person name="Takiguchi S."/>
            <person name="Watanabe S."/>
            <person name="Yosida M."/>
            <person name="Hotuta T."/>
            <person name="Kusano J."/>
            <person name="Kanehori K."/>
            <person name="Takahashi-Fujii A."/>
            <person name="Hara H."/>
            <person name="Tanase T.-O."/>
            <person name="Nomura Y."/>
            <person name="Togiya S."/>
            <person name="Komai F."/>
            <person name="Hara R."/>
            <person name="Takeuchi K."/>
            <person name="Arita M."/>
            <person name="Imose N."/>
            <person name="Musashino K."/>
            <person name="Yuuki H."/>
            <person name="Oshima A."/>
            <person name="Sasaki N."/>
            <person name="Aotsuka S."/>
            <person name="Yoshikawa Y."/>
            <person name="Matsunawa H."/>
            <person name="Ichihara T."/>
            <person name="Shiohata N."/>
            <person name="Sano S."/>
            <person name="Moriya S."/>
            <person name="Momiyama H."/>
            <person name="Satoh N."/>
            <person name="Takami S."/>
            <person name="Terashima Y."/>
            <person name="Suzuki O."/>
            <person name="Nakagawa S."/>
            <person name="Senoh A."/>
            <person name="Mizoguchi H."/>
            <person name="Goto Y."/>
            <person name="Shimizu F."/>
            <person name="Wakebe H."/>
            <person name="Hishigaki H."/>
            <person name="Watanabe T."/>
            <person name="Sugiyama A."/>
            <person name="Takemoto M."/>
            <person name="Kawakami B."/>
            <person name="Yamazaki M."/>
            <person name="Watanabe K."/>
            <person name="Kumagai A."/>
            <person name="Itakura S."/>
            <person name="Fukuzumi Y."/>
            <person name="Fujimori Y."/>
            <person name="Komiyama M."/>
            <person name="Tashiro H."/>
            <person name="Tanigami A."/>
            <person name="Fujiwara T."/>
            <person name="Ono T."/>
            <person name="Yamada K."/>
            <person name="Fujii Y."/>
            <person name="Ozaki K."/>
            <person name="Hirao M."/>
            <person name="Ohmori Y."/>
            <person name="Kawabata A."/>
            <person name="Hikiji T."/>
            <person name="Kobatake N."/>
            <person name="Inagaki H."/>
            <person name="Ikema Y."/>
            <person name="Okamoto S."/>
            <person name="Okitani R."/>
            <person name="Kawakami T."/>
            <person name="Noguchi S."/>
            <person name="Itoh T."/>
            <person name="Shigeta K."/>
            <person name="Senba T."/>
            <person name="Matsumura K."/>
            <person name="Nakajima Y."/>
            <person name="Mizuno T."/>
            <person name="Morinaga M."/>
            <person name="Sasaki M."/>
            <person name="Togashi T."/>
            <person name="Oyama M."/>
            <person name="Hata H."/>
            <person name="Watanabe M."/>
            <person name="Komatsu T."/>
            <person name="Mizushima-Sugano J."/>
            <person name="Satoh T."/>
            <person name="Shirai Y."/>
            <person name="Takahashi Y."/>
            <person name="Nakagawa K."/>
            <person name="Okumura K."/>
            <person name="Nagase T."/>
            <person name="Nomura N."/>
            <person name="Kikuchi H."/>
            <person name="Masuho Y."/>
            <person name="Yamashita R."/>
            <person name="Nakai K."/>
            <person name="Yada T."/>
            <person name="Nakamura Y."/>
            <person name="Ohara O."/>
            <person name="Isogai T."/>
            <person name="Sugano S."/>
        </authorList>
    </citation>
    <scope>NUCLEOTIDE SEQUENCE [LARGE SCALE MRNA]</scope>
    <source>
        <tissue>Mammary gland</tissue>
    </source>
</reference>
<reference key="8">
    <citation type="submission" date="2005-07" db="EMBL/GenBank/DDBJ databases">
        <authorList>
            <person name="Mural R.J."/>
            <person name="Istrail S."/>
            <person name="Sutton G.G."/>
            <person name="Florea L."/>
            <person name="Halpern A.L."/>
            <person name="Mobarry C.M."/>
            <person name="Lippert R."/>
            <person name="Walenz B."/>
            <person name="Shatkay H."/>
            <person name="Dew I."/>
            <person name="Miller J.R."/>
            <person name="Flanigan M.J."/>
            <person name="Edwards N.J."/>
            <person name="Bolanos R."/>
            <person name="Fasulo D."/>
            <person name="Halldorsson B.V."/>
            <person name="Hannenhalli S."/>
            <person name="Turner R."/>
            <person name="Yooseph S."/>
            <person name="Lu F."/>
            <person name="Nusskern D.R."/>
            <person name="Shue B.C."/>
            <person name="Zheng X.H."/>
            <person name="Zhong F."/>
            <person name="Delcher A.L."/>
            <person name="Huson D.H."/>
            <person name="Kravitz S.A."/>
            <person name="Mouchard L."/>
            <person name="Reinert K."/>
            <person name="Remington K.A."/>
            <person name="Clark A.G."/>
            <person name="Waterman M.S."/>
            <person name="Eichler E.E."/>
            <person name="Adams M.D."/>
            <person name="Hunkapiller M.W."/>
            <person name="Myers E.W."/>
            <person name="Venter J.C."/>
        </authorList>
    </citation>
    <scope>NUCLEOTIDE SEQUENCE [LARGE SCALE GENOMIC DNA]</scope>
</reference>
<reference key="9">
    <citation type="journal article" date="2004" name="Genome Res.">
        <title>The status, quality, and expansion of the NIH full-length cDNA project: the Mammalian Gene Collection (MGC).</title>
        <authorList>
            <consortium name="The MGC Project Team"/>
        </authorList>
    </citation>
    <scope>NUCLEOTIDE SEQUENCE [LARGE SCALE MRNA]</scope>
    <scope>VARIANTS ASP-130 AND THR-155</scope>
</reference>
<reference key="10">
    <citation type="journal article" date="2000" name="Biochem. Biophys. Res. Commun.">
        <title>Molecular identification and characterization of novel members of the human organic anion transporter (OATP) family.</title>
        <authorList>
            <person name="Tamai I."/>
            <person name="Nezu J."/>
            <person name="Uchino H."/>
            <person name="Sai Y."/>
            <person name="Oku A."/>
            <person name="Shimane M."/>
            <person name="Tsuji A."/>
        </authorList>
    </citation>
    <scope>FUNCTION</scope>
    <scope>TRANSPORTER ACTIVITY</scope>
    <scope>TISSUE SPECIFICITY</scope>
</reference>
<reference key="11">
    <citation type="journal article" date="2001" name="Gastroenterology">
        <title>Organic anion-transporting polypeptide B (OATP-B) and its functional comparison with three other OATPs of human liver.</title>
        <authorList>
            <person name="Kullak-Ublick G.A."/>
            <person name="Ismair M.G."/>
            <person name="Stieger B."/>
            <person name="Landmann L."/>
            <person name="Huber R."/>
            <person name="Pizzagalli F."/>
            <person name="Fattinger K."/>
            <person name="Meier P.J."/>
            <person name="Hagenbuch B."/>
        </authorList>
    </citation>
    <scope>FUNCTION</scope>
</reference>
<reference key="12">
    <citation type="journal article" date="2003" name="Biochem. J.">
        <title>Role of organic anion-transporting polypeptides, OATP-A, OATP-C and OATP-8, in the human placenta-maternal liver tandem excretory pathway for foetal bilirubin.</title>
        <authorList>
            <person name="Briz O."/>
            <person name="Serrano M.A."/>
            <person name="MacIas R.I."/>
            <person name="Gonzalez-Gallego J."/>
            <person name="Marin J.J."/>
        </authorList>
    </citation>
    <scope>FUNCTION</scope>
    <scope>TRANSPORTER ACTIVITY</scope>
</reference>
<reference key="13">
    <citation type="journal article" date="2004" name="J. Pharmacol. Exp. Ther.">
        <title>Contribution of OATP2 (OATP1B1) and OATP8 (OATP1B3) to the hepatic uptake of pitavastatin in humans.</title>
        <authorList>
            <person name="Hirano M."/>
            <person name="Maeda K."/>
            <person name="Shitara Y."/>
            <person name="Sugiyama Y."/>
        </authorList>
    </citation>
    <scope>FUNCTION</scope>
    <scope>TRANSPORTER ACTIVITY</scope>
    <scope>BIOPHYSICOCHEMICAL PROPERTIES</scope>
    <scope>TISSUE SPECIFICITY</scope>
</reference>
<reference key="14">
    <citation type="journal article" date="2005" name="Pharmacogenet. Genomics">
        <title>Functional characterization of SLCO1B1 (OATP-C) variants, SLCO1B1*5, SLCO1B1*15 and SLCO1B1*15+C1007G, by using transient expression systems of HeLa and HEK293 cells.</title>
        <authorList>
            <person name="Kameyama Y."/>
            <person name="Yamashita K."/>
            <person name="Kobayashi K."/>
            <person name="Hosokawa M."/>
            <person name="Chiba K."/>
        </authorList>
    </citation>
    <scope>FUNCTION</scope>
    <scope>TRANSPORTER ACTIVITY</scope>
</reference>
<reference key="15">
    <citation type="journal article" date="2006" name="Drug Metab. Dispos.">
        <title>Involvement of transporters in the hepatic uptake and biliary excretion of valsartan, a selective antagonist of the angiotensin II AT1-receptor, in humans.</title>
        <authorList>
            <person name="Yamashiro W."/>
            <person name="Maeda K."/>
            <person name="Hirouchi M."/>
            <person name="Adachi Y."/>
            <person name="Hu Z."/>
            <person name="Sugiyama Y."/>
        </authorList>
    </citation>
    <scope>FUNCTION</scope>
    <scope>BIOPHYSICOCHEMICAL PROPERTIES</scope>
</reference>
<reference key="16">
    <citation type="journal article" date="2006" name="J. Pharmacol. Exp. Ther.">
        <title>Vectorial transport of enalapril by Oatp1a1/Mrp2 and OATP1B1 and OATP1B3/MRP2 in rat and human livers.</title>
        <authorList>
            <person name="Liu L."/>
            <person name="Cui Y."/>
            <person name="Chung A.Y."/>
            <person name="Shitara Y."/>
            <person name="Sugiyama Y."/>
            <person name="Keppler D."/>
            <person name="Pang K.S."/>
        </authorList>
    </citation>
    <scope>FUNCTION</scope>
    <scope>TRANSPORTER ACTIVITY</scope>
    <scope>BIOPHYSICOCHEMICAL PROPERTIES</scope>
</reference>
<reference key="17">
    <citation type="journal article" date="2007" name="Am. J. Physiol.">
        <title>Human organic anion transporter 1B1 and 1B3 function as bidirectional carriers and do not mediate GSH-bile acid cotransport.</title>
        <authorList>
            <person name="Mahagita C."/>
            <person name="Grassl S.M."/>
            <person name="Piyachaturawat P."/>
            <person name="Ballatori N."/>
        </authorList>
    </citation>
    <scope>FUNCTION</scope>
    <scope>TRANSPORTER ACTIVITY</scope>
</reference>
<reference key="18">
    <citation type="journal article" date="2009" name="Am. J. Physiol.">
        <title>Mechanisms of pH-gradient driven transport mediated by organic anion polypeptide transporters.</title>
        <authorList>
            <person name="Leuthold S."/>
            <person name="Hagenbuch B."/>
            <person name="Mohebbi N."/>
            <person name="Wagner C.A."/>
            <person name="Meier P.J."/>
            <person name="Stieger B."/>
        </authorList>
    </citation>
    <scope>FUNCTION</scope>
    <scope>TRANSPORTER ACTIVITY</scope>
    <scope>BIOPHYSICOCHEMICAL PROPERTIES</scope>
    <scope>DOMAIN</scope>
</reference>
<reference key="19">
    <citation type="journal article" date="2012" name="J. Clin. Invest.">
        <title>Complete OATP1B1 and OATP1B3 deficiency causes human Rotor syndrome by interrupting conjugated bilirubin reuptake into the liver.</title>
        <authorList>
            <person name="van de Steeg E."/>
            <person name="Stranecky V."/>
            <person name="Hartmannova H."/>
            <person name="Noskova L."/>
            <person name="Hrebicek M."/>
            <person name="Wagenaar E."/>
            <person name="van Esch A."/>
            <person name="de Waart D.R."/>
            <person name="Oude Elferink R.P."/>
            <person name="Kenworthy K.E."/>
            <person name="Sticova E."/>
            <person name="al-Edreesi M."/>
            <person name="Knisely A.S."/>
            <person name="Kmoch S."/>
            <person name="Jirsa M."/>
            <person name="Schinkel A.H."/>
        </authorList>
    </citation>
    <scope>FUNCTION</scope>
    <scope>TRANSPORTER ACTIVITY</scope>
    <scope>TISSUE SPECIFICITY</scope>
    <scope>INVOLVEMENT IN HBLRR</scope>
</reference>
<reference key="20">
    <citation type="journal article" date="2013" name="Clin. Cancer Res.">
        <title>Influence of human OATP1B1, OATP1B3, and OATP1A2 on the pharmacokinetics of methotrexate and paclitaxel in humanized transgenic mice.</title>
        <authorList>
            <person name="van de Steeg E."/>
            <person name="van Esch A."/>
            <person name="Wagenaar E."/>
            <person name="Kenworthy K.E."/>
            <person name="Schinkel A.H."/>
        </authorList>
    </citation>
    <scope>FUNCTION</scope>
</reference>
<reference key="21">
    <citation type="journal article" date="2012" name="PLoS ONE">
        <title>N-Glycosylation dictates proper processing of organic anion transporting polypeptide 1B1.</title>
        <authorList>
            <person name="Yao J."/>
            <person name="Hong W."/>
            <person name="Huang J."/>
            <person name="Zhan K."/>
            <person name="Huang H."/>
            <person name="Hong M."/>
        </authorList>
    </citation>
    <scope>GLYCOSYLATION AT ASN-134; ASN-503 AND ASN-516</scope>
</reference>
<reference key="22">
    <citation type="journal article" date="2014" name="J. Proteomics">
        <title>An enzyme assisted RP-RPLC approach for in-depth analysis of human liver phosphoproteome.</title>
        <authorList>
            <person name="Bian Y."/>
            <person name="Song C."/>
            <person name="Cheng K."/>
            <person name="Dong M."/>
            <person name="Wang F."/>
            <person name="Huang J."/>
            <person name="Sun D."/>
            <person name="Wang L."/>
            <person name="Ye M."/>
            <person name="Zou H."/>
        </authorList>
    </citation>
    <scope>PHOSPHORYLATION [LARGE SCALE ANALYSIS] AT SER-293; SER-295; SER-672 AND SER-682</scope>
    <scope>IDENTIFICATION BY MASS SPECTROMETRY [LARGE SCALE ANALYSIS]</scope>
    <source>
        <tissue>Liver</tissue>
    </source>
</reference>
<reference key="23">
    <citation type="journal article" date="2016" name="Nat. Commun.">
        <title>A phosphotyrosine switch regulates organic cation transporters.</title>
        <authorList>
            <person name="Sprowl J.A."/>
            <person name="Ong S.S."/>
            <person name="Gibson A.A."/>
            <person name="Hu S."/>
            <person name="Du G."/>
            <person name="Lin W."/>
            <person name="Li L."/>
            <person name="Bharill S."/>
            <person name="Ness R.A."/>
            <person name="Stecula A."/>
            <person name="Offer S.M."/>
            <person name="Diasio R.B."/>
            <person name="Nies A.T."/>
            <person name="Schwab M."/>
            <person name="Cavaletti G."/>
            <person name="Schlatter E."/>
            <person name="Ciarimboli G."/>
            <person name="Schellens J.H.M."/>
            <person name="Isacoff E.Y."/>
            <person name="Sali A."/>
            <person name="Chen T."/>
            <person name="Baker S.D."/>
            <person name="Sparreboom A."/>
            <person name="Pabla N."/>
        </authorList>
    </citation>
    <scope>MUTAGENESIS OF TYR-367; TYR-625 AND TYR-645</scope>
    <scope>FUNCTION</scope>
</reference>
<reference key="24">
    <citation type="journal article" date="2016" name="Xenobiotica">
        <title>Organic anion transporting polypeptide (OATP)-mediated transport of coproporphyrins I and III.</title>
        <authorList>
            <person name="Bednarczyk D."/>
            <person name="Boiselle C."/>
        </authorList>
    </citation>
    <scope>FUNCTION</scope>
    <scope>BIOPHYSICOCHEMICAL PROPERTIES</scope>
</reference>
<reference key="25">
    <citation type="journal article" date="2022" name="Drug Metab. Dispos.">
        <title>Localization of Xenobiotic Transporters Expressed at the Human Blood-Testis Barrier.</title>
        <authorList>
            <person name="Hau R.K."/>
            <person name="Klein R.R."/>
            <person name="Wright S.H."/>
            <person name="Cherrington N.J."/>
        </authorList>
    </citation>
    <scope>FUNCTION</scope>
    <scope>SUBCELLULAR LOCATION</scope>
    <scope>TISSUE SPECIFICITY</scope>
</reference>
<reference key="26">
    <citation type="journal article" date="2001" name="J. Biol. Chem.">
        <title>Polymorphisms in OATP-C: identification of multiple allelic variants associated with altered transport activity among European- and African-Americans.</title>
        <authorList>
            <person name="Tirona R.G."/>
            <person name="Leake B.F."/>
            <person name="Merino G."/>
            <person name="Kim R.B."/>
        </authorList>
    </citation>
    <scope>VARIANTS LEU-73; ALA-82; ASP-130; LYS-152; THR-155; GLY-156; ALA-174; ASN-241; THR-353; ASP-432; GLY-462; ALA-488; GLY-655 AND GLY-667</scope>
    <scope>CHARACTERIZATION</scope>
</reference>
<reference key="27">
    <citation type="journal article" date="2002" name="J. Biol. Chem.">
        <title>A naturally occurring mutation in the SLC21A6 gene causing impaired membrane localization of the hepatocyte uptake transporter.</title>
        <authorList>
            <person name="Michalski C."/>
            <person name="Cui Y."/>
            <person name="Nies A.T."/>
            <person name="Nuessler A.K."/>
            <person name="Neuhaus P."/>
            <person name="Zanger U.M."/>
            <person name="Klein K."/>
            <person name="Eichelbaum M."/>
            <person name="Keppler D."/>
            <person name="Koenig J."/>
        </authorList>
    </citation>
    <scope>CHARACTERIZATION OF VARIANTS ASP-130; THR-155 AND ARG-193</scope>
    <scope>FUNCTION</scope>
    <scope>SUBCELLULAR LOCATION</scope>
    <scope>TRANSPORTER ACTIVITY</scope>
    <scope>TISSUE SPECIFICITY</scope>
</reference>
<reference key="28">
    <citation type="journal article" date="2002" name="J. Pharmacol. Exp. Ther.">
        <title>Genetic polymorphisms of human organic anion transporters OATP-C (SLC21A6) and OATP-B (SLC21A9): allele frequencies in the Japanese population and functional analysis.</title>
        <authorList>
            <person name="Nozawa T."/>
            <person name="Nakajima M."/>
            <person name="Tamai I."/>
            <person name="Noda K."/>
            <person name="Nezu J."/>
            <person name="Sai Y."/>
            <person name="Tsuji A."/>
            <person name="Yokoi T."/>
        </authorList>
    </citation>
    <scope>VARIANTS ASP-130; LYS-152; ALA-174 AND ASN-241</scope>
</reference>